<dbReference type="EMBL" id="D21163">
    <property type="protein sequence ID" value="BAA04699.2"/>
    <property type="status" value="ALT_INIT"/>
    <property type="molecule type" value="mRNA"/>
</dbReference>
<dbReference type="EMBL" id="AK296367">
    <property type="protein sequence ID" value="BAG59042.1"/>
    <property type="molecule type" value="mRNA"/>
</dbReference>
<dbReference type="EMBL" id="AK297392">
    <property type="protein sequence ID" value="BAG59832.1"/>
    <property type="molecule type" value="mRNA"/>
</dbReference>
<dbReference type="EMBL" id="AK316098">
    <property type="protein sequence ID" value="BAH14469.1"/>
    <property type="molecule type" value="mRNA"/>
</dbReference>
<dbReference type="EMBL" id="AC015936">
    <property type="status" value="NOT_ANNOTATED_CDS"/>
    <property type="molecule type" value="Genomic_DNA"/>
</dbReference>
<dbReference type="EMBL" id="CH471178">
    <property type="protein sequence ID" value="EAW51573.1"/>
    <property type="molecule type" value="Genomic_DNA"/>
</dbReference>
<dbReference type="EMBL" id="CH471178">
    <property type="protein sequence ID" value="EAW51574.1"/>
    <property type="molecule type" value="Genomic_DNA"/>
</dbReference>
<dbReference type="EMBL" id="BC002360">
    <property type="protein sequence ID" value="AAH02360.1"/>
    <property type="molecule type" value="mRNA"/>
</dbReference>
<dbReference type="CCDS" id="CCDS11489.1">
    <molecule id="Q15029-1"/>
</dbReference>
<dbReference type="CCDS" id="CCDS45707.1">
    <molecule id="Q15029-2"/>
</dbReference>
<dbReference type="CCDS" id="CCDS59295.1">
    <molecule id="Q15029-3"/>
</dbReference>
<dbReference type="RefSeq" id="NP_001136077.1">
    <molecule id="Q15029-2"/>
    <property type="nucleotide sequence ID" value="NM_001142605.2"/>
</dbReference>
<dbReference type="RefSeq" id="NP_001245282.1">
    <molecule id="Q15029-1"/>
    <property type="nucleotide sequence ID" value="NM_001258353.2"/>
</dbReference>
<dbReference type="RefSeq" id="NP_001245283.1">
    <molecule id="Q15029-3"/>
    <property type="nucleotide sequence ID" value="NM_001258354.2"/>
</dbReference>
<dbReference type="RefSeq" id="NP_004238.3">
    <molecule id="Q15029-1"/>
    <property type="nucleotide sequence ID" value="NM_004247.3"/>
</dbReference>
<dbReference type="PDB" id="3JCR">
    <property type="method" value="EM"/>
    <property type="resolution" value="7.00 A"/>
    <property type="chains" value="B=1-972"/>
</dbReference>
<dbReference type="PDB" id="5MQF">
    <property type="method" value="EM"/>
    <property type="resolution" value="5.90 A"/>
    <property type="chains" value="B=1-972"/>
</dbReference>
<dbReference type="PDB" id="5O9Z">
    <property type="method" value="EM"/>
    <property type="resolution" value="4.50 A"/>
    <property type="chains" value="B=1-972"/>
</dbReference>
<dbReference type="PDB" id="5XJC">
    <property type="method" value="EM"/>
    <property type="resolution" value="3.60 A"/>
    <property type="chains" value="C=1-972"/>
</dbReference>
<dbReference type="PDB" id="5YZG">
    <property type="method" value="EM"/>
    <property type="resolution" value="4.10 A"/>
    <property type="chains" value="C=1-972"/>
</dbReference>
<dbReference type="PDB" id="5Z56">
    <property type="method" value="EM"/>
    <property type="resolution" value="5.10 A"/>
    <property type="chains" value="C=1-972"/>
</dbReference>
<dbReference type="PDB" id="5Z57">
    <property type="method" value="EM"/>
    <property type="resolution" value="6.50 A"/>
    <property type="chains" value="C=1-972"/>
</dbReference>
<dbReference type="PDB" id="5Z58">
    <property type="method" value="EM"/>
    <property type="resolution" value="4.90 A"/>
    <property type="chains" value="C=1-972"/>
</dbReference>
<dbReference type="PDB" id="6AH0">
    <property type="method" value="EM"/>
    <property type="resolution" value="5.70 A"/>
    <property type="chains" value="C=1-972"/>
</dbReference>
<dbReference type="PDB" id="6AHD">
    <property type="method" value="EM"/>
    <property type="resolution" value="3.80 A"/>
    <property type="chains" value="C=1-972"/>
</dbReference>
<dbReference type="PDB" id="6FF4">
    <property type="method" value="EM"/>
    <property type="resolution" value="16.00 A"/>
    <property type="chains" value="B=1-972"/>
</dbReference>
<dbReference type="PDB" id="6FF7">
    <property type="method" value="EM"/>
    <property type="resolution" value="4.50 A"/>
    <property type="chains" value="B=1-972"/>
</dbReference>
<dbReference type="PDB" id="6ICZ">
    <property type="method" value="EM"/>
    <property type="resolution" value="3.00 A"/>
    <property type="chains" value="C=1-972"/>
</dbReference>
<dbReference type="PDB" id="6ID0">
    <property type="method" value="EM"/>
    <property type="resolution" value="2.90 A"/>
    <property type="chains" value="C=1-972"/>
</dbReference>
<dbReference type="PDB" id="6ID1">
    <property type="method" value="EM"/>
    <property type="resolution" value="2.86 A"/>
    <property type="chains" value="C=1-972"/>
</dbReference>
<dbReference type="PDB" id="6QDV">
    <property type="method" value="EM"/>
    <property type="resolution" value="3.30 A"/>
    <property type="chains" value="C=56-955"/>
</dbReference>
<dbReference type="PDB" id="6QW6">
    <property type="method" value="EM"/>
    <property type="resolution" value="2.92 A"/>
    <property type="chains" value="5C=104-956"/>
</dbReference>
<dbReference type="PDB" id="6QX9">
    <property type="method" value="EM"/>
    <property type="resolution" value="3.28 A"/>
    <property type="chains" value="5C=104-957"/>
</dbReference>
<dbReference type="PDB" id="6ZYM">
    <property type="method" value="EM"/>
    <property type="resolution" value="3.40 A"/>
    <property type="chains" value="B=1-952"/>
</dbReference>
<dbReference type="PDB" id="7AAV">
    <property type="method" value="EM"/>
    <property type="resolution" value="4.20 A"/>
    <property type="chains" value="r=1-972"/>
</dbReference>
<dbReference type="PDB" id="7ABF">
    <property type="method" value="EM"/>
    <property type="resolution" value="3.90 A"/>
    <property type="chains" value="r=1-972"/>
</dbReference>
<dbReference type="PDB" id="7ABG">
    <property type="method" value="EM"/>
    <property type="resolution" value="7.80 A"/>
    <property type="chains" value="r=1-972"/>
</dbReference>
<dbReference type="PDB" id="7ABI">
    <property type="method" value="EM"/>
    <property type="resolution" value="8.00 A"/>
    <property type="chains" value="r=1-972"/>
</dbReference>
<dbReference type="PDB" id="7DVQ">
    <property type="method" value="EM"/>
    <property type="resolution" value="2.89 A"/>
    <property type="chains" value="C=1-972"/>
</dbReference>
<dbReference type="PDB" id="7QTT">
    <property type="method" value="EM"/>
    <property type="resolution" value="3.10 A"/>
    <property type="chains" value="b=1-972"/>
</dbReference>
<dbReference type="PDB" id="7W59">
    <property type="method" value="EM"/>
    <property type="resolution" value="3.60 A"/>
    <property type="chains" value="C=1-972"/>
</dbReference>
<dbReference type="PDB" id="7W5A">
    <property type="method" value="EM"/>
    <property type="resolution" value="3.60 A"/>
    <property type="chains" value="C=1-972"/>
</dbReference>
<dbReference type="PDB" id="7W5B">
    <property type="method" value="EM"/>
    <property type="resolution" value="4.30 A"/>
    <property type="chains" value="C=1-972"/>
</dbReference>
<dbReference type="PDB" id="8C6J">
    <property type="method" value="EM"/>
    <property type="resolution" value="2.80 A"/>
    <property type="chains" value="C=1-972"/>
</dbReference>
<dbReference type="PDB" id="8CH6">
    <property type="method" value="EM"/>
    <property type="resolution" value="5.90 A"/>
    <property type="chains" value="b=1-972"/>
</dbReference>
<dbReference type="PDB" id="8H6E">
    <property type="method" value="EM"/>
    <property type="resolution" value="3.20 A"/>
    <property type="chains" value="5C=1-972"/>
</dbReference>
<dbReference type="PDB" id="8H6J">
    <property type="method" value="EM"/>
    <property type="resolution" value="3.25 A"/>
    <property type="chains" value="5C=1-972"/>
</dbReference>
<dbReference type="PDB" id="8H6K">
    <property type="method" value="EM"/>
    <property type="resolution" value="2.70 A"/>
    <property type="chains" value="5C=1-972"/>
</dbReference>
<dbReference type="PDB" id="8H6L">
    <property type="method" value="EM"/>
    <property type="resolution" value="2.60 A"/>
    <property type="chains" value="5C=1-972"/>
</dbReference>
<dbReference type="PDB" id="8I0P">
    <property type="method" value="EM"/>
    <property type="resolution" value="3.40 A"/>
    <property type="chains" value="C=1-972"/>
</dbReference>
<dbReference type="PDB" id="8I0R">
    <property type="method" value="EM"/>
    <property type="resolution" value="3.00 A"/>
    <property type="chains" value="C=1-972"/>
</dbReference>
<dbReference type="PDB" id="8I0S">
    <property type="method" value="EM"/>
    <property type="resolution" value="4.20 A"/>
    <property type="chains" value="C=1-972"/>
</dbReference>
<dbReference type="PDB" id="8I0T">
    <property type="method" value="EM"/>
    <property type="resolution" value="3.00 A"/>
    <property type="chains" value="C=1-972"/>
</dbReference>
<dbReference type="PDB" id="8I0U">
    <property type="method" value="EM"/>
    <property type="resolution" value="3.30 A"/>
    <property type="chains" value="C=1-972"/>
</dbReference>
<dbReference type="PDB" id="8I0V">
    <property type="method" value="EM"/>
    <property type="resolution" value="3.00 A"/>
    <property type="chains" value="C=1-972"/>
</dbReference>
<dbReference type="PDB" id="8I0W">
    <property type="method" value="EM"/>
    <property type="resolution" value="3.40 A"/>
    <property type="chains" value="C=1-972"/>
</dbReference>
<dbReference type="PDB" id="8Q7N">
    <property type="method" value="EM"/>
    <property type="resolution" value="3.10 A"/>
    <property type="chains" value="C=1-972"/>
</dbReference>
<dbReference type="PDB" id="8Q7Q">
    <property type="method" value="EM"/>
    <property type="resolution" value="3.20 A"/>
    <property type="chains" value="C=1-972"/>
</dbReference>
<dbReference type="PDB" id="8Q7V">
    <property type="method" value="EM"/>
    <property type="resolution" value="3.80 A"/>
    <property type="chains" value="C=1-972"/>
</dbReference>
<dbReference type="PDB" id="8Q7W">
    <property type="method" value="EM"/>
    <property type="resolution" value="3.90 A"/>
    <property type="chains" value="C=1-972"/>
</dbReference>
<dbReference type="PDB" id="8Q7X">
    <property type="method" value="EM"/>
    <property type="resolution" value="4.60 A"/>
    <property type="chains" value="C=1-972"/>
</dbReference>
<dbReference type="PDB" id="8Q91">
    <property type="method" value="EM"/>
    <property type="resolution" value="3.10 A"/>
    <property type="chains" value="C=1-972"/>
</dbReference>
<dbReference type="PDB" id="8QO9">
    <property type="method" value="EM"/>
    <property type="resolution" value="5.29 A"/>
    <property type="chains" value="C=1-972"/>
</dbReference>
<dbReference type="PDB" id="8QOZ">
    <property type="method" value="EM"/>
    <property type="resolution" value="3.10 A"/>
    <property type="chains" value="C=1-972"/>
</dbReference>
<dbReference type="PDB" id="8QP8">
    <property type="method" value="EM"/>
    <property type="resolution" value="3.50 A"/>
    <property type="chains" value="C=1-972"/>
</dbReference>
<dbReference type="PDB" id="8QP9">
    <property type="method" value="EM"/>
    <property type="resolution" value="4.10 A"/>
    <property type="chains" value="C=1-972"/>
</dbReference>
<dbReference type="PDB" id="8QPA">
    <property type="method" value="EM"/>
    <property type="resolution" value="3.70 A"/>
    <property type="chains" value="C=1-972"/>
</dbReference>
<dbReference type="PDB" id="8QPB">
    <property type="method" value="EM"/>
    <property type="resolution" value="3.70 A"/>
    <property type="chains" value="C=1-972"/>
</dbReference>
<dbReference type="PDB" id="8QPE">
    <property type="method" value="EM"/>
    <property type="resolution" value="3.10 A"/>
    <property type="chains" value="C=1-972"/>
</dbReference>
<dbReference type="PDB" id="8QPK">
    <property type="method" value="EM"/>
    <property type="resolution" value="4.20 A"/>
    <property type="chains" value="C=1-972"/>
</dbReference>
<dbReference type="PDB" id="8QXD">
    <property type="method" value="EM"/>
    <property type="resolution" value="9.60 A"/>
    <property type="chains" value="C=1-972"/>
</dbReference>
<dbReference type="PDB" id="8QZS">
    <property type="method" value="EM"/>
    <property type="resolution" value="4.10 A"/>
    <property type="chains" value="C=1-972"/>
</dbReference>
<dbReference type="PDB" id="8R08">
    <property type="method" value="EM"/>
    <property type="resolution" value="6.10 A"/>
    <property type="chains" value="C=1-972"/>
</dbReference>
<dbReference type="PDB" id="8R09">
    <property type="method" value="EM"/>
    <property type="resolution" value="4.30 A"/>
    <property type="chains" value="C=1-972"/>
</dbReference>
<dbReference type="PDB" id="8R0A">
    <property type="method" value="EM"/>
    <property type="resolution" value="5.80 A"/>
    <property type="chains" value="C=1-972"/>
</dbReference>
<dbReference type="PDB" id="8R0B">
    <property type="method" value="EM"/>
    <property type="resolution" value="4.40 A"/>
    <property type="chains" value="C=1-972"/>
</dbReference>
<dbReference type="PDB" id="8RC0">
    <property type="method" value="EM"/>
    <property type="resolution" value="3.20 A"/>
    <property type="chains" value="C=1-972"/>
</dbReference>
<dbReference type="PDB" id="8RM5">
    <property type="method" value="EM"/>
    <property type="resolution" value="6.90 A"/>
    <property type="chains" value="C=1-972"/>
</dbReference>
<dbReference type="PDB" id="8RO2">
    <property type="method" value="EM"/>
    <property type="resolution" value="3.50 A"/>
    <property type="chains" value="C=1-972"/>
</dbReference>
<dbReference type="PDB" id="8Y6O">
    <property type="method" value="EM"/>
    <property type="resolution" value="3.38 A"/>
    <property type="chains" value="D=1-972"/>
</dbReference>
<dbReference type="PDB" id="9FMD">
    <property type="method" value="EM"/>
    <property type="resolution" value="3.30 A"/>
    <property type="chains" value="C=1-972"/>
</dbReference>
<dbReference type="PDBsum" id="3JCR"/>
<dbReference type="PDBsum" id="5MQF"/>
<dbReference type="PDBsum" id="5O9Z"/>
<dbReference type="PDBsum" id="5XJC"/>
<dbReference type="PDBsum" id="5YZG"/>
<dbReference type="PDBsum" id="5Z56"/>
<dbReference type="PDBsum" id="5Z57"/>
<dbReference type="PDBsum" id="5Z58"/>
<dbReference type="PDBsum" id="6AH0"/>
<dbReference type="PDBsum" id="6AHD"/>
<dbReference type="PDBsum" id="6FF4"/>
<dbReference type="PDBsum" id="6FF7"/>
<dbReference type="PDBsum" id="6ICZ"/>
<dbReference type="PDBsum" id="6ID0"/>
<dbReference type="PDBsum" id="6ID1"/>
<dbReference type="PDBsum" id="6QDV"/>
<dbReference type="PDBsum" id="6QW6"/>
<dbReference type="PDBsum" id="6QX9"/>
<dbReference type="PDBsum" id="6ZYM"/>
<dbReference type="PDBsum" id="7AAV"/>
<dbReference type="PDBsum" id="7ABF"/>
<dbReference type="PDBsum" id="7ABG"/>
<dbReference type="PDBsum" id="7ABI"/>
<dbReference type="PDBsum" id="7DVQ"/>
<dbReference type="PDBsum" id="7QTT"/>
<dbReference type="PDBsum" id="7W59"/>
<dbReference type="PDBsum" id="7W5A"/>
<dbReference type="PDBsum" id="7W5B"/>
<dbReference type="PDBsum" id="8C6J"/>
<dbReference type="PDBsum" id="8CH6"/>
<dbReference type="PDBsum" id="8H6E"/>
<dbReference type="PDBsum" id="8H6J"/>
<dbReference type="PDBsum" id="8H6K"/>
<dbReference type="PDBsum" id="8H6L"/>
<dbReference type="PDBsum" id="8I0P"/>
<dbReference type="PDBsum" id="8I0R"/>
<dbReference type="PDBsum" id="8I0S"/>
<dbReference type="PDBsum" id="8I0T"/>
<dbReference type="PDBsum" id="8I0U"/>
<dbReference type="PDBsum" id="8I0V"/>
<dbReference type="PDBsum" id="8I0W"/>
<dbReference type="PDBsum" id="8Q7N"/>
<dbReference type="PDBsum" id="8Q7Q"/>
<dbReference type="PDBsum" id="8Q7V"/>
<dbReference type="PDBsum" id="8Q7W"/>
<dbReference type="PDBsum" id="8Q7X"/>
<dbReference type="PDBsum" id="8Q91"/>
<dbReference type="PDBsum" id="8QO9"/>
<dbReference type="PDBsum" id="8QOZ"/>
<dbReference type="PDBsum" id="8QP8"/>
<dbReference type="PDBsum" id="8QP9"/>
<dbReference type="PDBsum" id="8QPA"/>
<dbReference type="PDBsum" id="8QPB"/>
<dbReference type="PDBsum" id="8QPE"/>
<dbReference type="PDBsum" id="8QPK"/>
<dbReference type="PDBsum" id="8QXD"/>
<dbReference type="PDBsum" id="8QZS"/>
<dbReference type="PDBsum" id="8R08"/>
<dbReference type="PDBsum" id="8R09"/>
<dbReference type="PDBsum" id="8R0A"/>
<dbReference type="PDBsum" id="8R0B"/>
<dbReference type="PDBsum" id="8RC0"/>
<dbReference type="PDBsum" id="8RM5"/>
<dbReference type="PDBsum" id="8RO2"/>
<dbReference type="PDBsum" id="8Y6O"/>
<dbReference type="PDBsum" id="9FMD"/>
<dbReference type="EMDB" id="EMD-11569"/>
<dbReference type="EMDB" id="EMD-11693"/>
<dbReference type="EMDB" id="EMD-11694"/>
<dbReference type="EMDB" id="EMD-11695"/>
<dbReference type="EMDB" id="EMD-11697"/>
<dbReference type="EMDB" id="EMD-14146"/>
<dbReference type="EMDB" id="EMD-16452"/>
<dbReference type="EMDB" id="EMD-16658"/>
<dbReference type="EMDB" id="EMD-18225"/>
<dbReference type="EMDB" id="EMD-18229"/>
<dbReference type="EMDB" id="EMD-18234"/>
<dbReference type="EMDB" id="EMD-18235"/>
<dbReference type="EMDB" id="EMD-18237"/>
<dbReference type="EMDB" id="EMD-18267"/>
<dbReference type="EMDB" id="EMD-18529"/>
<dbReference type="EMDB" id="EMD-18542"/>
<dbReference type="EMDB" id="EMD-18544"/>
<dbReference type="EMDB" id="EMD-18545"/>
<dbReference type="EMDB" id="EMD-18546"/>
<dbReference type="EMDB" id="EMD-18547"/>
<dbReference type="EMDB" id="EMD-18548"/>
<dbReference type="EMDB" id="EMD-18555"/>
<dbReference type="EMDB" id="EMD-18718"/>
<dbReference type="EMDB" id="EMD-18781"/>
<dbReference type="EMDB" id="EMD-18786"/>
<dbReference type="EMDB" id="EMD-18787"/>
<dbReference type="EMDB" id="EMD-18788"/>
<dbReference type="EMDB" id="EMD-18789"/>
<dbReference type="EMDB" id="EMD-19041"/>
<dbReference type="EMDB" id="EMD-19349"/>
<dbReference type="EMDB" id="EMD-19399"/>
<dbReference type="EMDB" id="EMD-30875"/>
<dbReference type="EMDB" id="EMD-32317"/>
<dbReference type="EMDB" id="EMD-32319"/>
<dbReference type="EMDB" id="EMD-32321"/>
<dbReference type="EMDB" id="EMD-34500"/>
<dbReference type="EMDB" id="EMD-34505"/>
<dbReference type="EMDB" id="EMD-34507"/>
<dbReference type="EMDB" id="EMD-34508"/>
<dbReference type="EMDB" id="EMD-35105"/>
<dbReference type="EMDB" id="EMD-35107"/>
<dbReference type="EMDB" id="EMD-35108"/>
<dbReference type="EMDB" id="EMD-35109"/>
<dbReference type="EMDB" id="EMD-35110"/>
<dbReference type="EMDB" id="EMD-35111"/>
<dbReference type="EMDB" id="EMD-35113"/>
<dbReference type="EMDB" id="EMD-3545"/>
<dbReference type="EMDB" id="EMD-3766"/>
<dbReference type="EMDB" id="EMD-38993"/>
<dbReference type="EMDB" id="EMD-4255"/>
<dbReference type="EMDB" id="EMD-4525"/>
<dbReference type="EMDB" id="EMD-4658"/>
<dbReference type="EMDB" id="EMD-4665"/>
<dbReference type="EMDB" id="EMD-6721"/>
<dbReference type="EMDB" id="EMD-6864"/>
<dbReference type="EMDB" id="EMD-6889"/>
<dbReference type="EMDB" id="EMD-6890"/>
<dbReference type="EMDB" id="EMD-6891"/>
<dbReference type="EMDB" id="EMD-9621"/>
<dbReference type="EMDB" id="EMD-9624"/>
<dbReference type="EMDB" id="EMD-9645"/>
<dbReference type="EMDB" id="EMD-9646"/>
<dbReference type="EMDB" id="EMD-9647"/>
<dbReference type="SMR" id="Q15029"/>
<dbReference type="BioGRID" id="114749">
    <property type="interactions" value="1460"/>
</dbReference>
<dbReference type="ComplexPortal" id="CPX-2391">
    <property type="entry name" value="U4/U6.U5 small nuclear ribonucleoprotein complex"/>
</dbReference>
<dbReference type="CORUM" id="Q15029"/>
<dbReference type="FunCoup" id="Q15029">
    <property type="interactions" value="4417"/>
</dbReference>
<dbReference type="IntAct" id="Q15029">
    <property type="interactions" value="332"/>
</dbReference>
<dbReference type="MINT" id="Q15029"/>
<dbReference type="STRING" id="9606.ENSP00000392094"/>
<dbReference type="GlyGen" id="Q15029">
    <property type="glycosylation" value="2 sites, 1 N-linked glycan (1 site), 1 O-linked glycan (1 site)"/>
</dbReference>
<dbReference type="iPTMnet" id="Q15029"/>
<dbReference type="MetOSite" id="Q15029"/>
<dbReference type="PhosphoSitePlus" id="Q15029"/>
<dbReference type="SwissPalm" id="Q15029"/>
<dbReference type="BioMuta" id="EFTUD2"/>
<dbReference type="DMDM" id="18202501"/>
<dbReference type="jPOST" id="Q15029"/>
<dbReference type="MassIVE" id="Q15029"/>
<dbReference type="PaxDb" id="9606-ENSP00000392094"/>
<dbReference type="PeptideAtlas" id="Q15029"/>
<dbReference type="PRIDE" id="Q15029"/>
<dbReference type="ProteomicsDB" id="4423"/>
<dbReference type="ProteomicsDB" id="60379">
    <molecule id="Q15029-1"/>
</dbReference>
<dbReference type="Pumba" id="Q15029"/>
<dbReference type="Antibodypedia" id="17535">
    <property type="antibodies" value="246 antibodies from 30 providers"/>
</dbReference>
<dbReference type="DNASU" id="9343"/>
<dbReference type="Ensembl" id="ENST00000402521.7">
    <molecule id="Q15029-2"/>
    <property type="protein sequence ID" value="ENSP00000385873.2"/>
    <property type="gene ID" value="ENSG00000108883.13"/>
</dbReference>
<dbReference type="Ensembl" id="ENST00000426333.7">
    <molecule id="Q15029-1"/>
    <property type="protein sequence ID" value="ENSP00000392094.1"/>
    <property type="gene ID" value="ENSG00000108883.13"/>
</dbReference>
<dbReference type="Ensembl" id="ENST00000591382.5">
    <molecule id="Q15029-1"/>
    <property type="protein sequence ID" value="ENSP00000467805.1"/>
    <property type="gene ID" value="ENSG00000108883.13"/>
</dbReference>
<dbReference type="Ensembl" id="ENST00000592576.5">
    <molecule id="Q15029-3"/>
    <property type="protein sequence ID" value="ENSP00000465058.1"/>
    <property type="gene ID" value="ENSG00000108883.13"/>
</dbReference>
<dbReference type="GeneID" id="9343"/>
<dbReference type="KEGG" id="hsa:9343"/>
<dbReference type="MANE-Select" id="ENST00000426333.7">
    <property type="protein sequence ID" value="ENSP00000392094.1"/>
    <property type="RefSeq nucleotide sequence ID" value="NM_004247.4"/>
    <property type="RefSeq protein sequence ID" value="NP_004238.3"/>
</dbReference>
<dbReference type="UCSC" id="uc002ihn.3">
    <molecule id="Q15029-1"/>
    <property type="organism name" value="human"/>
</dbReference>
<dbReference type="AGR" id="HGNC:30858"/>
<dbReference type="CTD" id="9343"/>
<dbReference type="DisGeNET" id="9343"/>
<dbReference type="GeneCards" id="EFTUD2"/>
<dbReference type="GeneReviews" id="EFTUD2"/>
<dbReference type="HGNC" id="HGNC:30858">
    <property type="gene designation" value="EFTUD2"/>
</dbReference>
<dbReference type="HPA" id="ENSG00000108883">
    <property type="expression patterns" value="Low tissue specificity"/>
</dbReference>
<dbReference type="MalaCards" id="EFTUD2"/>
<dbReference type="MIM" id="603892">
    <property type="type" value="gene"/>
</dbReference>
<dbReference type="MIM" id="610536">
    <property type="type" value="phenotype"/>
</dbReference>
<dbReference type="neXtProt" id="NX_Q15029"/>
<dbReference type="OpenTargets" id="ENSG00000108883"/>
<dbReference type="Orphanet" id="79113">
    <property type="disease" value="Mandibulofacial dysostosis-microcephaly syndrome"/>
</dbReference>
<dbReference type="PharmGKB" id="PA142671915"/>
<dbReference type="VEuPathDB" id="HostDB:ENSG00000108883"/>
<dbReference type="eggNOG" id="KOG0468">
    <property type="taxonomic scope" value="Eukaryota"/>
</dbReference>
<dbReference type="GeneTree" id="ENSGT00940000155685"/>
<dbReference type="HOGENOM" id="CLU_002794_11_2_1"/>
<dbReference type="InParanoid" id="Q15029"/>
<dbReference type="OMA" id="YIFRPIR"/>
<dbReference type="OrthoDB" id="364892at2759"/>
<dbReference type="PAN-GO" id="Q15029">
    <property type="GO annotations" value="6 GO annotations based on evolutionary models"/>
</dbReference>
<dbReference type="PhylomeDB" id="Q15029"/>
<dbReference type="TreeFam" id="TF105703"/>
<dbReference type="PathwayCommons" id="Q15029"/>
<dbReference type="Reactome" id="R-HSA-72163">
    <property type="pathway name" value="mRNA Splicing - Major Pathway"/>
</dbReference>
<dbReference type="Reactome" id="R-HSA-72165">
    <property type="pathway name" value="mRNA Splicing - Minor Pathway"/>
</dbReference>
<dbReference type="SignaLink" id="Q15029"/>
<dbReference type="SIGNOR" id="Q15029"/>
<dbReference type="BioGRID-ORCS" id="9343">
    <property type="hits" value="822 hits in 1159 CRISPR screens"/>
</dbReference>
<dbReference type="CD-CODE" id="232F8A39">
    <property type="entry name" value="P-body"/>
</dbReference>
<dbReference type="CD-CODE" id="91857CE7">
    <property type="entry name" value="Nucleolus"/>
</dbReference>
<dbReference type="ChiTaRS" id="EFTUD2">
    <property type="organism name" value="human"/>
</dbReference>
<dbReference type="GeneWiki" id="EFTUD2"/>
<dbReference type="GenomeRNAi" id="9343"/>
<dbReference type="Pharos" id="Q15029">
    <property type="development level" value="Tbio"/>
</dbReference>
<dbReference type="PRO" id="PR:Q15029"/>
<dbReference type="Proteomes" id="UP000005640">
    <property type="component" value="Chromosome 17"/>
</dbReference>
<dbReference type="RNAct" id="Q15029">
    <property type="molecule type" value="protein"/>
</dbReference>
<dbReference type="Bgee" id="ENSG00000108883">
    <property type="expression patterns" value="Expressed in bone marrow cell and 181 other cell types or tissues"/>
</dbReference>
<dbReference type="ExpressionAtlas" id="Q15029">
    <property type="expression patterns" value="baseline and differential"/>
</dbReference>
<dbReference type="GO" id="GO:0015030">
    <property type="term" value="C:Cajal body"/>
    <property type="evidence" value="ECO:0000314"/>
    <property type="project" value="BHF-UCL"/>
</dbReference>
<dbReference type="GO" id="GO:0071013">
    <property type="term" value="C:catalytic step 2 spliceosome"/>
    <property type="evidence" value="ECO:0000314"/>
    <property type="project" value="UniProtKB"/>
</dbReference>
<dbReference type="GO" id="GO:0005829">
    <property type="term" value="C:cytosol"/>
    <property type="evidence" value="ECO:0000314"/>
    <property type="project" value="HPA"/>
</dbReference>
<dbReference type="GO" id="GO:0043231">
    <property type="term" value="C:intracellular membrane-bounded organelle"/>
    <property type="evidence" value="ECO:0000314"/>
    <property type="project" value="HPA"/>
</dbReference>
<dbReference type="GO" id="GO:0016020">
    <property type="term" value="C:membrane"/>
    <property type="evidence" value="ECO:0007005"/>
    <property type="project" value="UniProtKB"/>
</dbReference>
<dbReference type="GO" id="GO:0016607">
    <property type="term" value="C:nuclear speck"/>
    <property type="evidence" value="ECO:0000314"/>
    <property type="project" value="BHF-UCL"/>
</dbReference>
<dbReference type="GO" id="GO:0005654">
    <property type="term" value="C:nucleoplasm"/>
    <property type="evidence" value="ECO:0000314"/>
    <property type="project" value="HPA"/>
</dbReference>
<dbReference type="GO" id="GO:0005634">
    <property type="term" value="C:nucleus"/>
    <property type="evidence" value="ECO:0000314"/>
    <property type="project" value="UniProtKB"/>
</dbReference>
<dbReference type="GO" id="GO:0071007">
    <property type="term" value="C:U2-type catalytic step 2 spliceosome"/>
    <property type="evidence" value="ECO:0000314"/>
    <property type="project" value="UniProtKB"/>
</dbReference>
<dbReference type="GO" id="GO:0071005">
    <property type="term" value="C:U2-type precatalytic spliceosome"/>
    <property type="evidence" value="ECO:0000314"/>
    <property type="project" value="UniProtKB"/>
</dbReference>
<dbReference type="GO" id="GO:0046540">
    <property type="term" value="C:U4/U6 x U5 tri-snRNP complex"/>
    <property type="evidence" value="ECO:0000314"/>
    <property type="project" value="CAFA"/>
</dbReference>
<dbReference type="GO" id="GO:0005525">
    <property type="term" value="F:GTP binding"/>
    <property type="evidence" value="ECO:0007669"/>
    <property type="project" value="UniProtKB-KW"/>
</dbReference>
<dbReference type="GO" id="GO:0003924">
    <property type="term" value="F:GTPase activity"/>
    <property type="evidence" value="ECO:0000318"/>
    <property type="project" value="GO_Central"/>
</dbReference>
<dbReference type="GO" id="GO:0003723">
    <property type="term" value="F:RNA binding"/>
    <property type="evidence" value="ECO:0007005"/>
    <property type="project" value="UniProtKB"/>
</dbReference>
<dbReference type="GO" id="GO:0030623">
    <property type="term" value="F:U5 snRNA binding"/>
    <property type="evidence" value="ECO:0000318"/>
    <property type="project" value="GO_Central"/>
</dbReference>
<dbReference type="GO" id="GO:0071466">
    <property type="term" value="P:cellular response to xenobiotic stimulus"/>
    <property type="evidence" value="ECO:0007669"/>
    <property type="project" value="Ensembl"/>
</dbReference>
<dbReference type="GO" id="GO:0000398">
    <property type="term" value="P:mRNA splicing, via spliceosome"/>
    <property type="evidence" value="ECO:0000314"/>
    <property type="project" value="UniProtKB"/>
</dbReference>
<dbReference type="GO" id="GO:0042220">
    <property type="term" value="P:response to cocaine"/>
    <property type="evidence" value="ECO:0007669"/>
    <property type="project" value="Ensembl"/>
</dbReference>
<dbReference type="CDD" id="cd04098">
    <property type="entry name" value="eEF2_C_snRNP"/>
    <property type="match status" value="1"/>
</dbReference>
<dbReference type="CDD" id="cd04090">
    <property type="entry name" value="EF2_II_snRNP"/>
    <property type="match status" value="1"/>
</dbReference>
<dbReference type="CDD" id="cd01683">
    <property type="entry name" value="EF2_IV_snRNP"/>
    <property type="match status" value="1"/>
</dbReference>
<dbReference type="CDD" id="cd16264">
    <property type="entry name" value="snRNP_III"/>
    <property type="match status" value="1"/>
</dbReference>
<dbReference type="CDD" id="cd04167">
    <property type="entry name" value="Snu114p"/>
    <property type="match status" value="1"/>
</dbReference>
<dbReference type="FunFam" id="3.30.70.240:FF:000004">
    <property type="entry name" value="116 kDa U5 small nuclear ribonucleoprotein"/>
    <property type="match status" value="1"/>
</dbReference>
<dbReference type="FunFam" id="2.40.30.10:FF:000029">
    <property type="entry name" value="116 kDa U5 small nuclear ribonucleoprotein component"/>
    <property type="match status" value="1"/>
</dbReference>
<dbReference type="FunFam" id="3.30.230.10:FF:000009">
    <property type="entry name" value="116 kDa U5 small nuclear ribonucleoprotein component"/>
    <property type="match status" value="1"/>
</dbReference>
<dbReference type="FunFam" id="3.40.50.300:FF:000574">
    <property type="entry name" value="116 kDa U5 small nuclear ribonucleoprotein component"/>
    <property type="match status" value="1"/>
</dbReference>
<dbReference type="FunFam" id="3.90.1430.10:FF:000001">
    <property type="entry name" value="116 kDa U5 small nuclear ribonucleoprotein component"/>
    <property type="match status" value="1"/>
</dbReference>
<dbReference type="FunFam" id="3.30.70.870:FF:000002">
    <property type="entry name" value="Translation elongation factor 2"/>
    <property type="match status" value="1"/>
</dbReference>
<dbReference type="Gene3D" id="3.30.230.10">
    <property type="match status" value="1"/>
</dbReference>
<dbReference type="Gene3D" id="3.30.70.240">
    <property type="match status" value="1"/>
</dbReference>
<dbReference type="Gene3D" id="3.30.70.870">
    <property type="entry name" value="Elongation Factor G (Translational Gtpase), domain 3"/>
    <property type="match status" value="1"/>
</dbReference>
<dbReference type="Gene3D" id="3.40.50.300">
    <property type="entry name" value="P-loop containing nucleotide triphosphate hydrolases"/>
    <property type="match status" value="1"/>
</dbReference>
<dbReference type="Gene3D" id="2.40.30.10">
    <property type="entry name" value="Translation factors"/>
    <property type="match status" value="1"/>
</dbReference>
<dbReference type="Gene3D" id="3.90.1430.10">
    <property type="entry name" value="Yeast translation eEF2 (G' domain)"/>
    <property type="match status" value="1"/>
</dbReference>
<dbReference type="InterPro" id="IPR041095">
    <property type="entry name" value="EFG_II"/>
</dbReference>
<dbReference type="InterPro" id="IPR035647">
    <property type="entry name" value="EFG_III/V"/>
</dbReference>
<dbReference type="InterPro" id="IPR000640">
    <property type="entry name" value="EFG_V-like"/>
</dbReference>
<dbReference type="InterPro" id="IPR004161">
    <property type="entry name" value="EFTu-like_2"/>
</dbReference>
<dbReference type="InterPro" id="IPR031950">
    <property type="entry name" value="EFTUD2_N"/>
</dbReference>
<dbReference type="InterPro" id="IPR027417">
    <property type="entry name" value="P-loop_NTPase"/>
</dbReference>
<dbReference type="InterPro" id="IPR020568">
    <property type="entry name" value="Ribosomal_Su5_D2-typ_SF"/>
</dbReference>
<dbReference type="InterPro" id="IPR014721">
    <property type="entry name" value="Ribsml_uS5_D2-typ_fold_subgr"/>
</dbReference>
<dbReference type="InterPro" id="IPR005225">
    <property type="entry name" value="Small_GTP-bd"/>
</dbReference>
<dbReference type="InterPro" id="IPR044121">
    <property type="entry name" value="Snu114_GTP-bd"/>
</dbReference>
<dbReference type="InterPro" id="IPR000795">
    <property type="entry name" value="T_Tr_GTP-bd_dom"/>
</dbReference>
<dbReference type="InterPro" id="IPR009000">
    <property type="entry name" value="Transl_B-barrel_sf"/>
</dbReference>
<dbReference type="InterPro" id="IPR005517">
    <property type="entry name" value="Transl_elong_EFG/EF2_IV"/>
</dbReference>
<dbReference type="InterPro" id="IPR035655">
    <property type="entry name" value="U5-116kDa_C"/>
</dbReference>
<dbReference type="NCBIfam" id="TIGR00231">
    <property type="entry name" value="small_GTP"/>
    <property type="match status" value="1"/>
</dbReference>
<dbReference type="PANTHER" id="PTHR42908:SF6">
    <property type="entry name" value="116 KDA U5 SMALL NUCLEAR RIBONUCLEOPROTEIN COMPONENT"/>
    <property type="match status" value="1"/>
</dbReference>
<dbReference type="PANTHER" id="PTHR42908">
    <property type="entry name" value="TRANSLATION ELONGATION FACTOR-RELATED"/>
    <property type="match status" value="1"/>
</dbReference>
<dbReference type="Pfam" id="PF00679">
    <property type="entry name" value="EFG_C"/>
    <property type="match status" value="1"/>
</dbReference>
<dbReference type="Pfam" id="PF14492">
    <property type="entry name" value="EFG_III"/>
    <property type="match status" value="1"/>
</dbReference>
<dbReference type="Pfam" id="PF03764">
    <property type="entry name" value="EFG_IV"/>
    <property type="match status" value="1"/>
</dbReference>
<dbReference type="Pfam" id="PF16004">
    <property type="entry name" value="EFTUD2"/>
    <property type="match status" value="1"/>
</dbReference>
<dbReference type="Pfam" id="PF00009">
    <property type="entry name" value="GTP_EFTU"/>
    <property type="match status" value="1"/>
</dbReference>
<dbReference type="Pfam" id="PF03144">
    <property type="entry name" value="GTP_EFTU_D2"/>
    <property type="match status" value="1"/>
</dbReference>
<dbReference type="PRINTS" id="PR00315">
    <property type="entry name" value="ELONGATNFCT"/>
</dbReference>
<dbReference type="SMART" id="SM00838">
    <property type="entry name" value="EFG_C"/>
    <property type="match status" value="1"/>
</dbReference>
<dbReference type="SMART" id="SM00889">
    <property type="entry name" value="EFG_IV"/>
    <property type="match status" value="1"/>
</dbReference>
<dbReference type="SUPFAM" id="SSF54980">
    <property type="entry name" value="EF-G C-terminal domain-like"/>
    <property type="match status" value="2"/>
</dbReference>
<dbReference type="SUPFAM" id="SSF52540">
    <property type="entry name" value="P-loop containing nucleoside triphosphate hydrolases"/>
    <property type="match status" value="1"/>
</dbReference>
<dbReference type="SUPFAM" id="SSF54211">
    <property type="entry name" value="Ribosomal protein S5 domain 2-like"/>
    <property type="match status" value="1"/>
</dbReference>
<dbReference type="SUPFAM" id="SSF50447">
    <property type="entry name" value="Translation proteins"/>
    <property type="match status" value="1"/>
</dbReference>
<dbReference type="PROSITE" id="PS51722">
    <property type="entry name" value="G_TR_2"/>
    <property type="match status" value="1"/>
</dbReference>
<feature type="chain" id="PRO_0000091563" description="116 kDa U5 small nuclear ribonucleoprotein component">
    <location>
        <begin position="1"/>
        <end position="972"/>
    </location>
</feature>
<feature type="domain" description="tr-type G" evidence="2">
    <location>
        <begin position="127"/>
        <end position="409"/>
    </location>
</feature>
<feature type="region of interest" description="Disordered" evidence="3">
    <location>
        <begin position="1"/>
        <end position="54"/>
    </location>
</feature>
<feature type="compositionally biased region" description="Acidic residues" evidence="3">
    <location>
        <begin position="17"/>
        <end position="26"/>
    </location>
</feature>
<feature type="compositionally biased region" description="Acidic residues" evidence="3">
    <location>
        <begin position="34"/>
        <end position="48"/>
    </location>
</feature>
<feature type="binding site" evidence="1">
    <location>
        <begin position="136"/>
        <end position="143"/>
    </location>
    <ligand>
        <name>GTP</name>
        <dbReference type="ChEBI" id="CHEBI:37565"/>
    </ligand>
</feature>
<feature type="binding site" evidence="1">
    <location>
        <begin position="204"/>
        <end position="208"/>
    </location>
    <ligand>
        <name>GTP</name>
        <dbReference type="ChEBI" id="CHEBI:37565"/>
    </ligand>
</feature>
<feature type="binding site" evidence="1">
    <location>
        <begin position="258"/>
        <end position="261"/>
    </location>
    <ligand>
        <name>GTP</name>
        <dbReference type="ChEBI" id="CHEBI:37565"/>
    </ligand>
</feature>
<feature type="modified residue" description="N-acetylmethionine" evidence="41 42 43 44">
    <location>
        <position position="1"/>
    </location>
</feature>
<feature type="modified residue" description="Phosphoserine" evidence="40 42 43 45">
    <location>
        <position position="19"/>
    </location>
</feature>
<feature type="modified residue" description="Phosphothreonine" evidence="45">
    <location>
        <position position="86"/>
    </location>
</feature>
<feature type="cross-link" description="Glycyl lysine isopeptide (Lys-Gly) (interchain with G-Cter in SUMO1); alternate" evidence="46">
    <location>
        <position position="64"/>
    </location>
</feature>
<feature type="cross-link" description="Glycyl lysine isopeptide (Lys-Gly) (interchain with G-Cter in SUMO2); alternate" evidence="47">
    <location>
        <position position="64"/>
    </location>
</feature>
<feature type="splice variant" id="VSP_044282" description="In isoform 2." evidence="24">
    <location>
        <begin position="1"/>
        <end position="35"/>
    </location>
</feature>
<feature type="splice variant" id="VSP_055175" description="In isoform 3." evidence="24">
    <location>
        <begin position="143"/>
        <end position="152"/>
    </location>
</feature>
<feature type="sequence variant" id="VAR_067580" description="In MFDM; dbSNP:rs387906877." evidence="7">
    <original>R</original>
    <variation>W</variation>
    <location>
        <position position="262"/>
    </location>
</feature>
<feature type="sequence variant" id="VAR_067581" description="In MFDM." evidence="7">
    <original>C</original>
    <variation>R</variation>
    <location>
        <position position="476"/>
    </location>
</feature>
<feature type="sequence variant" id="VAR_067582" description="In MFDM; dbSNP:rs387906879." evidence="7">
    <original>L</original>
    <variation>R</variation>
    <location>
        <position position="637"/>
    </location>
</feature>
<feature type="sequence variant" id="VAR_014931" description="In dbSNP:rs1056505.">
    <original>G</original>
    <variation>V</variation>
    <location>
        <position position="773"/>
    </location>
</feature>
<feature type="sequence conflict" description="In Ref. 5; AAH02360." evidence="25" ref="5">
    <original>G</original>
    <variation>V</variation>
    <location>
        <position position="321"/>
    </location>
</feature>
<feature type="sequence conflict" description="In Ref. 2; BAG59832." evidence="25" ref="2">
    <original>T</original>
    <variation>S</variation>
    <location>
        <position position="619"/>
    </location>
</feature>
<feature type="sequence conflict" description="In Ref. 2; BAG59832." evidence="25" ref="2">
    <original>D</original>
    <variation>G</variation>
    <location>
        <position position="955"/>
    </location>
</feature>
<feature type="turn" evidence="50">
    <location>
        <begin position="60"/>
        <end position="62"/>
    </location>
</feature>
<feature type="helix" evidence="50">
    <location>
        <begin position="69"/>
        <end position="73"/>
    </location>
</feature>
<feature type="strand" evidence="50">
    <location>
        <begin position="75"/>
        <end position="81"/>
    </location>
</feature>
<feature type="strand" evidence="51">
    <location>
        <begin position="89"/>
        <end position="91"/>
    </location>
</feature>
<feature type="helix" evidence="50">
    <location>
        <begin position="117"/>
        <end position="123"/>
    </location>
</feature>
<feature type="strand" evidence="50">
    <location>
        <begin position="126"/>
        <end position="141"/>
    </location>
</feature>
<feature type="helix" evidence="50">
    <location>
        <begin position="142"/>
        <end position="153"/>
    </location>
</feature>
<feature type="strand" evidence="52">
    <location>
        <begin position="161"/>
        <end position="163"/>
    </location>
</feature>
<feature type="strand" evidence="50">
    <location>
        <begin position="171"/>
        <end position="173"/>
    </location>
</feature>
<feature type="helix" evidence="50">
    <location>
        <begin position="174"/>
        <end position="177"/>
    </location>
</feature>
<feature type="strand" evidence="50">
    <location>
        <begin position="185"/>
        <end position="190"/>
    </location>
</feature>
<feature type="strand" evidence="52">
    <location>
        <begin position="193"/>
        <end position="195"/>
    </location>
</feature>
<feature type="strand" evidence="50">
    <location>
        <begin position="198"/>
        <end position="204"/>
    </location>
</feature>
<feature type="helix" evidence="50">
    <location>
        <begin position="209"/>
        <end position="211"/>
    </location>
</feature>
<feature type="helix" evidence="50">
    <location>
        <begin position="212"/>
        <end position="221"/>
    </location>
</feature>
<feature type="strand" evidence="50">
    <location>
        <begin position="223"/>
        <end position="230"/>
    </location>
</feature>
<feature type="turn" evidence="50">
    <location>
        <begin position="231"/>
        <end position="233"/>
    </location>
</feature>
<feature type="helix" evidence="50">
    <location>
        <begin position="237"/>
        <end position="248"/>
    </location>
</feature>
<feature type="strand" evidence="50">
    <location>
        <begin position="252"/>
        <end position="258"/>
    </location>
</feature>
<feature type="helix" evidence="50">
    <location>
        <begin position="261"/>
        <end position="264"/>
    </location>
</feature>
<feature type="turn" evidence="50">
    <location>
        <begin position="265"/>
        <end position="267"/>
    </location>
</feature>
<feature type="helix" evidence="50">
    <location>
        <begin position="271"/>
        <end position="292"/>
    </location>
</feature>
<feature type="strand" evidence="54">
    <location>
        <begin position="294"/>
        <end position="296"/>
    </location>
</feature>
<feature type="turn" evidence="50">
    <location>
        <begin position="302"/>
        <end position="305"/>
    </location>
</feature>
<feature type="strand" evidence="50">
    <location>
        <begin position="307"/>
        <end position="310"/>
    </location>
</feature>
<feature type="turn" evidence="50">
    <location>
        <begin position="312"/>
        <end position="315"/>
    </location>
</feature>
<feature type="strand" evidence="52">
    <location>
        <begin position="316"/>
        <end position="318"/>
    </location>
</feature>
<feature type="helix" evidence="50">
    <location>
        <begin position="320"/>
        <end position="330"/>
    </location>
</feature>
<feature type="strand" evidence="50">
    <location>
        <begin position="331"/>
        <end position="333"/>
    </location>
</feature>
<feature type="helix" evidence="50">
    <location>
        <begin position="336"/>
        <end position="341"/>
    </location>
</feature>
<feature type="strand" evidence="50">
    <location>
        <begin position="343"/>
        <end position="346"/>
    </location>
</feature>
<feature type="strand" evidence="50">
    <location>
        <begin position="348"/>
        <end position="350"/>
    </location>
</feature>
<feature type="turn" evidence="50">
    <location>
        <begin position="351"/>
        <end position="354"/>
    </location>
</feature>
<feature type="strand" evidence="50">
    <location>
        <begin position="355"/>
        <end position="360"/>
    </location>
</feature>
<feature type="strand" evidence="52">
    <location>
        <begin position="361"/>
        <end position="364"/>
    </location>
</feature>
<feature type="helix" evidence="50">
    <location>
        <begin position="368"/>
        <end position="386"/>
    </location>
</feature>
<feature type="turn" evidence="50">
    <location>
        <begin position="388"/>
        <end position="391"/>
    </location>
</feature>
<feature type="helix" evidence="50">
    <location>
        <begin position="392"/>
        <end position="396"/>
    </location>
</feature>
<feature type="turn" evidence="50">
    <location>
        <begin position="397"/>
        <end position="400"/>
    </location>
</feature>
<feature type="helix" evidence="50">
    <location>
        <begin position="407"/>
        <end position="409"/>
    </location>
</feature>
<feature type="helix" evidence="50">
    <location>
        <begin position="412"/>
        <end position="424"/>
    </location>
</feature>
<feature type="helix" evidence="50">
    <location>
        <begin position="428"/>
        <end position="435"/>
    </location>
</feature>
<feature type="turn" evidence="49">
    <location>
        <begin position="440"/>
        <end position="444"/>
    </location>
</feature>
<feature type="helix" evidence="50">
    <location>
        <begin position="445"/>
        <end position="452"/>
    </location>
</feature>
<feature type="strand" evidence="50">
    <location>
        <begin position="453"/>
        <end position="455"/>
    </location>
</feature>
<feature type="turn" evidence="50">
    <location>
        <begin position="459"/>
        <end position="461"/>
    </location>
</feature>
<feature type="helix" evidence="50">
    <location>
        <begin position="462"/>
        <end position="467"/>
    </location>
</feature>
<feature type="strand" evidence="50">
    <location>
        <begin position="470"/>
        <end position="473"/>
    </location>
</feature>
<feature type="strand" evidence="50">
    <location>
        <begin position="475"/>
        <end position="483"/>
    </location>
</feature>
<feature type="strand" evidence="48">
    <location>
        <begin position="485"/>
        <end position="488"/>
    </location>
</feature>
<feature type="strand" evidence="50">
    <location>
        <begin position="490"/>
        <end position="499"/>
    </location>
</feature>
<feature type="strand" evidence="51">
    <location>
        <begin position="501"/>
        <end position="504"/>
    </location>
</feature>
<feature type="strand" evidence="50">
    <location>
        <begin position="506"/>
        <end position="510"/>
    </location>
</feature>
<feature type="turn" evidence="52">
    <location>
        <begin position="516"/>
        <end position="518"/>
    </location>
</feature>
<feature type="helix" evidence="55">
    <location>
        <begin position="519"/>
        <end position="521"/>
    </location>
</feature>
<feature type="strand" evidence="50">
    <location>
        <begin position="523"/>
        <end position="526"/>
    </location>
</feature>
<feature type="strand" evidence="50">
    <location>
        <begin position="530"/>
        <end position="533"/>
    </location>
</feature>
<feature type="strand" evidence="49">
    <location>
        <begin position="534"/>
        <end position="536"/>
    </location>
</feature>
<feature type="strand" evidence="50">
    <location>
        <begin position="538"/>
        <end position="540"/>
    </location>
</feature>
<feature type="strand" evidence="50">
    <location>
        <begin position="542"/>
        <end position="544"/>
    </location>
</feature>
<feature type="strand" evidence="50">
    <location>
        <begin position="549"/>
        <end position="554"/>
    </location>
</feature>
<feature type="turn" evidence="50">
    <location>
        <begin position="556"/>
        <end position="558"/>
    </location>
</feature>
<feature type="strand" evidence="51">
    <location>
        <begin position="560"/>
        <end position="562"/>
    </location>
</feature>
<feature type="strand" evidence="50">
    <location>
        <begin position="563"/>
        <end position="566"/>
    </location>
</feature>
<feature type="strand" evidence="52">
    <location>
        <begin position="568"/>
        <end position="570"/>
    </location>
</feature>
<feature type="strand" evidence="50">
    <location>
        <begin position="588"/>
        <end position="596"/>
    </location>
</feature>
<feature type="helix" evidence="52">
    <location>
        <begin position="597"/>
        <end position="599"/>
    </location>
</feature>
<feature type="helix" evidence="50">
    <location>
        <begin position="600"/>
        <end position="613"/>
    </location>
</feature>
<feature type="strand" evidence="50">
    <location>
        <begin position="618"/>
        <end position="621"/>
    </location>
</feature>
<feature type="strand" evidence="48">
    <location>
        <begin position="623"/>
        <end position="625"/>
    </location>
</feature>
<feature type="strand" evidence="50">
    <location>
        <begin position="627"/>
        <end position="633"/>
    </location>
</feature>
<feature type="helix" evidence="50">
    <location>
        <begin position="634"/>
        <end position="646"/>
    </location>
</feature>
<feature type="strand" evidence="50">
    <location>
        <begin position="653"/>
        <end position="655"/>
    </location>
</feature>
<feature type="strand" evidence="50">
    <location>
        <begin position="663"/>
        <end position="666"/>
    </location>
</feature>
<feature type="strand" evidence="50">
    <location>
        <begin position="674"/>
        <end position="677"/>
    </location>
</feature>
<feature type="strand" evidence="50">
    <location>
        <begin position="679"/>
        <end position="681"/>
    </location>
</feature>
<feature type="strand" evidence="50">
    <location>
        <begin position="684"/>
        <end position="690"/>
    </location>
</feature>
<feature type="helix" evidence="50">
    <location>
        <begin position="694"/>
        <end position="700"/>
    </location>
</feature>
<feature type="turn" evidence="50">
    <location>
        <begin position="701"/>
        <end position="705"/>
    </location>
</feature>
<feature type="strand" evidence="53">
    <location>
        <begin position="707"/>
        <end position="709"/>
    </location>
</feature>
<feature type="helix" evidence="50">
    <location>
        <begin position="711"/>
        <end position="722"/>
    </location>
</feature>
<feature type="helix" evidence="50">
    <location>
        <begin position="726"/>
        <end position="729"/>
    </location>
</feature>
<feature type="strand" evidence="54">
    <location>
        <begin position="732"/>
        <end position="734"/>
    </location>
</feature>
<feature type="strand" evidence="50">
    <location>
        <begin position="737"/>
        <end position="740"/>
    </location>
</feature>
<feature type="strand" evidence="50">
    <location>
        <begin position="742"/>
        <end position="747"/>
    </location>
</feature>
<feature type="helix" evidence="50">
    <location>
        <begin position="752"/>
        <end position="754"/>
    </location>
</feature>
<feature type="helix" evidence="50">
    <location>
        <begin position="756"/>
        <end position="776"/>
    </location>
</feature>
<feature type="turn" evidence="50">
    <location>
        <begin position="778"/>
        <end position="780"/>
    </location>
</feature>
<feature type="strand" evidence="50">
    <location>
        <begin position="786"/>
        <end position="795"/>
    </location>
</feature>
<feature type="strand" evidence="50">
    <location>
        <begin position="801"/>
        <end position="803"/>
    </location>
</feature>
<feature type="helix" evidence="50">
    <location>
        <begin position="804"/>
        <end position="821"/>
    </location>
</feature>
<feature type="strand" evidence="50">
    <location>
        <begin position="825"/>
        <end position="838"/>
    </location>
</feature>
<feature type="helix" evidence="50">
    <location>
        <begin position="840"/>
        <end position="851"/>
    </location>
</feature>
<feature type="turn" evidence="54">
    <location>
        <begin position="852"/>
        <end position="854"/>
    </location>
</feature>
<feature type="strand" evidence="50">
    <location>
        <begin position="857"/>
        <end position="859"/>
    </location>
</feature>
<feature type="strand" evidence="50">
    <location>
        <begin position="869"/>
        <end position="879"/>
    </location>
</feature>
<feature type="helix" evidence="50">
    <location>
        <begin position="883"/>
        <end position="890"/>
    </location>
</feature>
<feature type="turn" evidence="50">
    <location>
        <begin position="891"/>
        <end position="893"/>
    </location>
</feature>
<feature type="strand" evidence="50">
    <location>
        <begin position="895"/>
        <end position="906"/>
    </location>
</feature>
<feature type="strand" evidence="50">
    <location>
        <begin position="920"/>
        <end position="922"/>
    </location>
</feature>
<feature type="helix" evidence="50">
    <location>
        <begin position="926"/>
        <end position="928"/>
    </location>
</feature>
<feature type="helix" evidence="50">
    <location>
        <begin position="929"/>
        <end position="940"/>
    </location>
</feature>
<feature type="turn" evidence="52">
    <location>
        <begin position="949"/>
        <end position="952"/>
    </location>
</feature>
<evidence type="ECO:0000255" key="1"/>
<evidence type="ECO:0000255" key="2">
    <source>
        <dbReference type="PROSITE-ProRule" id="PRU01059"/>
    </source>
</evidence>
<evidence type="ECO:0000256" key="3">
    <source>
        <dbReference type="SAM" id="MobiDB-lite"/>
    </source>
</evidence>
<evidence type="ECO:0000269" key="4">
    <source>
    </source>
</evidence>
<evidence type="ECO:0000269" key="5">
    <source>
    </source>
</evidence>
<evidence type="ECO:0000269" key="6">
    <source>
    </source>
</evidence>
<evidence type="ECO:0000269" key="7">
    <source>
    </source>
</evidence>
<evidence type="ECO:0000269" key="8">
    <source>
    </source>
</evidence>
<evidence type="ECO:0000269" key="9">
    <source>
    </source>
</evidence>
<evidence type="ECO:0000269" key="10">
    <source>
    </source>
</evidence>
<evidence type="ECO:0000269" key="11">
    <source>
    </source>
</evidence>
<evidence type="ECO:0000269" key="12">
    <source>
    </source>
</evidence>
<evidence type="ECO:0000269" key="13">
    <source>
    </source>
</evidence>
<evidence type="ECO:0000269" key="14">
    <source>
    </source>
</evidence>
<evidence type="ECO:0000269" key="15">
    <source>
    </source>
</evidence>
<evidence type="ECO:0000269" key="16">
    <source>
    </source>
</evidence>
<evidence type="ECO:0000269" key="17">
    <source>
    </source>
</evidence>
<evidence type="ECO:0000269" key="18">
    <source>
    </source>
</evidence>
<evidence type="ECO:0000269" key="19">
    <source>
    </source>
</evidence>
<evidence type="ECO:0000269" key="20">
    <source>
    </source>
</evidence>
<evidence type="ECO:0000269" key="21">
    <source>
    </source>
</evidence>
<evidence type="ECO:0000269" key="22">
    <source>
    </source>
</evidence>
<evidence type="ECO:0000269" key="23">
    <source>
    </source>
</evidence>
<evidence type="ECO:0000303" key="24">
    <source>
    </source>
</evidence>
<evidence type="ECO:0000305" key="25"/>
<evidence type="ECO:0000305" key="26">
    <source>
    </source>
</evidence>
<evidence type="ECO:0007744" key="27">
    <source>
        <dbReference type="PDB" id="3JCR"/>
    </source>
</evidence>
<evidence type="ECO:0007744" key="28">
    <source>
        <dbReference type="PDB" id="5MQF"/>
    </source>
</evidence>
<evidence type="ECO:0007744" key="29">
    <source>
        <dbReference type="PDB" id="5O9Z"/>
    </source>
</evidence>
<evidence type="ECO:0007744" key="30">
    <source>
        <dbReference type="PDB" id="5XJC"/>
    </source>
</evidence>
<evidence type="ECO:0007744" key="31">
    <source>
        <dbReference type="PDB" id="5YZG"/>
    </source>
</evidence>
<evidence type="ECO:0007744" key="32">
    <source>
        <dbReference type="PDB" id="5Z56"/>
    </source>
</evidence>
<evidence type="ECO:0007744" key="33">
    <source>
        <dbReference type="PDB" id="5Z57"/>
    </source>
</evidence>
<evidence type="ECO:0007744" key="34">
    <source>
        <dbReference type="PDB" id="5Z58"/>
    </source>
</evidence>
<evidence type="ECO:0007744" key="35">
    <source>
        <dbReference type="PDB" id="6AH0"/>
    </source>
</evidence>
<evidence type="ECO:0007744" key="36">
    <source>
        <dbReference type="PDB" id="6AHD"/>
    </source>
</evidence>
<evidence type="ECO:0007744" key="37">
    <source>
        <dbReference type="PDB" id="6FF4"/>
    </source>
</evidence>
<evidence type="ECO:0007744" key="38">
    <source>
        <dbReference type="PDB" id="6QDV"/>
    </source>
</evidence>
<evidence type="ECO:0007744" key="39">
    <source>
        <dbReference type="PDB" id="7DVQ"/>
    </source>
</evidence>
<evidence type="ECO:0007744" key="40">
    <source>
    </source>
</evidence>
<evidence type="ECO:0007744" key="41">
    <source>
    </source>
</evidence>
<evidence type="ECO:0007744" key="42">
    <source>
    </source>
</evidence>
<evidence type="ECO:0007744" key="43">
    <source>
    </source>
</evidence>
<evidence type="ECO:0007744" key="44">
    <source>
    </source>
</evidence>
<evidence type="ECO:0007744" key="45">
    <source>
    </source>
</evidence>
<evidence type="ECO:0007744" key="46">
    <source>
    </source>
</evidence>
<evidence type="ECO:0007744" key="47">
    <source>
    </source>
</evidence>
<evidence type="ECO:0007829" key="48">
    <source>
        <dbReference type="PDB" id="6ICZ"/>
    </source>
</evidence>
<evidence type="ECO:0007829" key="49">
    <source>
        <dbReference type="PDB" id="6ID0"/>
    </source>
</evidence>
<evidence type="ECO:0007829" key="50">
    <source>
        <dbReference type="PDB" id="6ID1"/>
    </source>
</evidence>
<evidence type="ECO:0007829" key="51">
    <source>
        <dbReference type="PDB" id="6ZYM"/>
    </source>
</evidence>
<evidence type="ECO:0007829" key="52">
    <source>
        <dbReference type="PDB" id="7DVQ"/>
    </source>
</evidence>
<evidence type="ECO:0007829" key="53">
    <source>
        <dbReference type="PDB" id="8Q7Q"/>
    </source>
</evidence>
<evidence type="ECO:0007829" key="54">
    <source>
        <dbReference type="PDB" id="8Q91"/>
    </source>
</evidence>
<evidence type="ECO:0007829" key="55">
    <source>
        <dbReference type="PDB" id="8QOZ"/>
    </source>
</evidence>
<protein>
    <recommendedName>
        <fullName>116 kDa U5 small nuclear ribonucleoprotein component</fullName>
    </recommendedName>
    <alternativeName>
        <fullName>Elongation factor Tu GTP-binding domain-containing protein 2</fullName>
    </alternativeName>
    <alternativeName>
        <fullName>SNU114 homolog</fullName>
        <shortName>hSNU114</shortName>
    </alternativeName>
    <alternativeName>
        <fullName>U5 snRNP-specific protein, 116 kDa</fullName>
        <shortName>U5-116 kDa</shortName>
    </alternativeName>
</protein>
<proteinExistence type="evidence at protein level"/>
<accession>Q15029</accession>
<accession>B4DK30</accession>
<accession>B4DMC0</accession>
<accession>D3DX58</accession>
<accession>K7EJ81</accession>
<accession>Q9BUR0</accession>
<sequence>MDTDLYDEFGNYIGPELDSDEDDDELGRETKDLDEMDDDDDDDDVGDHDDDHPGMEVVLHEDKKYYPTAEEVYGPEVETIVQEEDTQPLTEPIIKPVKTKKFTLMEQTLPVTVYEMDFLADLMDNSELIRNVTLCGHLHHGKTCFVDCLIEQTHPEIRKRYDQDLCYTDILFTEQERGVGIKSTPVTVVLPDTKGKSYLFNIMDTPGHVNFSDEVTAGLRISDGVVLFIDAAEGVMLNTERLIKHAVQERLAVTVCINKIDRLILELKLPPTDAYYKLRHIVDEVNGLISMYSTDENLILSPLLGNVCFSSSQYSICFTLGSFAKIYADTFGDINYQEFAKRLWGDIYFNPKTRKFTKKAPTSSSQRSFVEFILEPLYKILAQVVGDVDTSLPRTLDELGIHLTKEELKLNIRPLLRLVCKKFFGEFTGFVDMCVQHIPSPKVGAKPKIEHTYTGGVDSDLGEAMSDCDPDGPLMCHTTKMYSTDDGVQFHAFGRVLSGTIHAGQPVKVLGENYTLEDEEDSQICTVGRLWISVARYHIEVNRVPAGNWVLIEGVDQPIVKTATITEPRGNEEAQIFRPLKFNTTSVIKIAVEPVNPSELPKMLDGLRKVNKSYPSLTTKVEESGEHVILGTGELYLDCVMHDLRKMYSEIDIKVADPVVTFCETVVETSSLKCFAETPNKKNKITMIAEPLEKGLAEDIENEVVQITWNRKKLGEFFQTKYDWDLLAARSIWAFGPDATGPNILVDDTLPSEVDKALLGSVKDSIVQGFQWGTREGPLCDELIRNVKFKILDAVVAQEPLHRGGGQIIPTARRVVYSAFLMATPRLMEPYYFVEVQAPADCVSAVYTVLARRRGHVTQDAPIPGSPLYTIKAFIPAIDSFGFETDLRTHTQGQAFSLSVFHHWQIVPGDPLDKSIVIRPLEPQPAPHLAREFMIKTRRRKGLSEDVSISKFFDDPMLLELAKQDVVLNYPM</sequence>
<reference key="1">
    <citation type="journal article" date="1994" name="DNA Res.">
        <title>Prediction of the coding sequences of unidentified human genes. I. The coding sequences of 40 new genes (KIAA0001-KIAA0040) deduced by analysis of randomly sampled cDNA clones from human immature myeloid cell line KG-1.</title>
        <authorList>
            <person name="Nomura N."/>
            <person name="Miyajima N."/>
            <person name="Sazuka T."/>
            <person name="Tanaka A."/>
            <person name="Kawarabayasi Y."/>
            <person name="Sato S."/>
            <person name="Nagase T."/>
            <person name="Seki N."/>
            <person name="Ishikawa K."/>
            <person name="Tabata S."/>
        </authorList>
    </citation>
    <scope>NUCLEOTIDE SEQUENCE [LARGE SCALE MRNA] (ISOFORM 1)</scope>
    <source>
        <tissue>Bone marrow</tissue>
    </source>
</reference>
<reference key="2">
    <citation type="journal article" date="2004" name="Nat. Genet.">
        <title>Complete sequencing and characterization of 21,243 full-length human cDNAs.</title>
        <authorList>
            <person name="Ota T."/>
            <person name="Suzuki Y."/>
            <person name="Nishikawa T."/>
            <person name="Otsuki T."/>
            <person name="Sugiyama T."/>
            <person name="Irie R."/>
            <person name="Wakamatsu A."/>
            <person name="Hayashi K."/>
            <person name="Sato H."/>
            <person name="Nagai K."/>
            <person name="Kimura K."/>
            <person name="Makita H."/>
            <person name="Sekine M."/>
            <person name="Obayashi M."/>
            <person name="Nishi T."/>
            <person name="Shibahara T."/>
            <person name="Tanaka T."/>
            <person name="Ishii S."/>
            <person name="Yamamoto J."/>
            <person name="Saito K."/>
            <person name="Kawai Y."/>
            <person name="Isono Y."/>
            <person name="Nakamura Y."/>
            <person name="Nagahari K."/>
            <person name="Murakami K."/>
            <person name="Yasuda T."/>
            <person name="Iwayanagi T."/>
            <person name="Wagatsuma M."/>
            <person name="Shiratori A."/>
            <person name="Sudo H."/>
            <person name="Hosoiri T."/>
            <person name="Kaku Y."/>
            <person name="Kodaira H."/>
            <person name="Kondo H."/>
            <person name="Sugawara M."/>
            <person name="Takahashi M."/>
            <person name="Kanda K."/>
            <person name="Yokoi T."/>
            <person name="Furuya T."/>
            <person name="Kikkawa E."/>
            <person name="Omura Y."/>
            <person name="Abe K."/>
            <person name="Kamihara K."/>
            <person name="Katsuta N."/>
            <person name="Sato K."/>
            <person name="Tanikawa M."/>
            <person name="Yamazaki M."/>
            <person name="Ninomiya K."/>
            <person name="Ishibashi T."/>
            <person name="Yamashita H."/>
            <person name="Murakawa K."/>
            <person name="Fujimori K."/>
            <person name="Tanai H."/>
            <person name="Kimata M."/>
            <person name="Watanabe M."/>
            <person name="Hiraoka S."/>
            <person name="Chiba Y."/>
            <person name="Ishida S."/>
            <person name="Ono Y."/>
            <person name="Takiguchi S."/>
            <person name="Watanabe S."/>
            <person name="Yosida M."/>
            <person name="Hotuta T."/>
            <person name="Kusano J."/>
            <person name="Kanehori K."/>
            <person name="Takahashi-Fujii A."/>
            <person name="Hara H."/>
            <person name="Tanase T.-O."/>
            <person name="Nomura Y."/>
            <person name="Togiya S."/>
            <person name="Komai F."/>
            <person name="Hara R."/>
            <person name="Takeuchi K."/>
            <person name="Arita M."/>
            <person name="Imose N."/>
            <person name="Musashino K."/>
            <person name="Yuuki H."/>
            <person name="Oshima A."/>
            <person name="Sasaki N."/>
            <person name="Aotsuka S."/>
            <person name="Yoshikawa Y."/>
            <person name="Matsunawa H."/>
            <person name="Ichihara T."/>
            <person name="Shiohata N."/>
            <person name="Sano S."/>
            <person name="Moriya S."/>
            <person name="Momiyama H."/>
            <person name="Satoh N."/>
            <person name="Takami S."/>
            <person name="Terashima Y."/>
            <person name="Suzuki O."/>
            <person name="Nakagawa S."/>
            <person name="Senoh A."/>
            <person name="Mizoguchi H."/>
            <person name="Goto Y."/>
            <person name="Shimizu F."/>
            <person name="Wakebe H."/>
            <person name="Hishigaki H."/>
            <person name="Watanabe T."/>
            <person name="Sugiyama A."/>
            <person name="Takemoto M."/>
            <person name="Kawakami B."/>
            <person name="Yamazaki M."/>
            <person name="Watanabe K."/>
            <person name="Kumagai A."/>
            <person name="Itakura S."/>
            <person name="Fukuzumi Y."/>
            <person name="Fujimori Y."/>
            <person name="Komiyama M."/>
            <person name="Tashiro H."/>
            <person name="Tanigami A."/>
            <person name="Fujiwara T."/>
            <person name="Ono T."/>
            <person name="Yamada K."/>
            <person name="Fujii Y."/>
            <person name="Ozaki K."/>
            <person name="Hirao M."/>
            <person name="Ohmori Y."/>
            <person name="Kawabata A."/>
            <person name="Hikiji T."/>
            <person name="Kobatake N."/>
            <person name="Inagaki H."/>
            <person name="Ikema Y."/>
            <person name="Okamoto S."/>
            <person name="Okitani R."/>
            <person name="Kawakami T."/>
            <person name="Noguchi S."/>
            <person name="Itoh T."/>
            <person name="Shigeta K."/>
            <person name="Senba T."/>
            <person name="Matsumura K."/>
            <person name="Nakajima Y."/>
            <person name="Mizuno T."/>
            <person name="Morinaga M."/>
            <person name="Sasaki M."/>
            <person name="Togashi T."/>
            <person name="Oyama M."/>
            <person name="Hata H."/>
            <person name="Watanabe M."/>
            <person name="Komatsu T."/>
            <person name="Mizushima-Sugano J."/>
            <person name="Satoh T."/>
            <person name="Shirai Y."/>
            <person name="Takahashi Y."/>
            <person name="Nakagawa K."/>
            <person name="Okumura K."/>
            <person name="Nagase T."/>
            <person name="Nomura N."/>
            <person name="Kikuchi H."/>
            <person name="Masuho Y."/>
            <person name="Yamashita R."/>
            <person name="Nakai K."/>
            <person name="Yada T."/>
            <person name="Nakamura Y."/>
            <person name="Ohara O."/>
            <person name="Isogai T."/>
            <person name="Sugano S."/>
        </authorList>
    </citation>
    <scope>NUCLEOTIDE SEQUENCE [LARGE SCALE MRNA] (ISOFORMS 2 AND 3)</scope>
    <source>
        <tissue>Thalamus</tissue>
    </source>
</reference>
<reference key="3">
    <citation type="journal article" date="2006" name="Nature">
        <title>DNA sequence of human chromosome 17 and analysis of rearrangement in the human lineage.</title>
        <authorList>
            <person name="Zody M.C."/>
            <person name="Garber M."/>
            <person name="Adams D.J."/>
            <person name="Sharpe T."/>
            <person name="Harrow J."/>
            <person name="Lupski J.R."/>
            <person name="Nicholson C."/>
            <person name="Searle S.M."/>
            <person name="Wilming L."/>
            <person name="Young S.K."/>
            <person name="Abouelleil A."/>
            <person name="Allen N.R."/>
            <person name="Bi W."/>
            <person name="Bloom T."/>
            <person name="Borowsky M.L."/>
            <person name="Bugalter B.E."/>
            <person name="Butler J."/>
            <person name="Chang J.L."/>
            <person name="Chen C.-K."/>
            <person name="Cook A."/>
            <person name="Corum B."/>
            <person name="Cuomo C.A."/>
            <person name="de Jong P.J."/>
            <person name="DeCaprio D."/>
            <person name="Dewar K."/>
            <person name="FitzGerald M."/>
            <person name="Gilbert J."/>
            <person name="Gibson R."/>
            <person name="Gnerre S."/>
            <person name="Goldstein S."/>
            <person name="Grafham D.V."/>
            <person name="Grocock R."/>
            <person name="Hafez N."/>
            <person name="Hagopian D.S."/>
            <person name="Hart E."/>
            <person name="Norman C.H."/>
            <person name="Humphray S."/>
            <person name="Jaffe D.B."/>
            <person name="Jones M."/>
            <person name="Kamal M."/>
            <person name="Khodiyar V.K."/>
            <person name="LaButti K."/>
            <person name="Laird G."/>
            <person name="Lehoczky J."/>
            <person name="Liu X."/>
            <person name="Lokyitsang T."/>
            <person name="Loveland J."/>
            <person name="Lui A."/>
            <person name="Macdonald P."/>
            <person name="Major J.E."/>
            <person name="Matthews L."/>
            <person name="Mauceli E."/>
            <person name="McCarroll S.A."/>
            <person name="Mihalev A.H."/>
            <person name="Mudge J."/>
            <person name="Nguyen C."/>
            <person name="Nicol R."/>
            <person name="O'Leary S.B."/>
            <person name="Osoegawa K."/>
            <person name="Schwartz D.C."/>
            <person name="Shaw-Smith C."/>
            <person name="Stankiewicz P."/>
            <person name="Steward C."/>
            <person name="Swarbreck D."/>
            <person name="Venkataraman V."/>
            <person name="Whittaker C.A."/>
            <person name="Yang X."/>
            <person name="Zimmer A.R."/>
            <person name="Bradley A."/>
            <person name="Hubbard T."/>
            <person name="Birren B.W."/>
            <person name="Rogers J."/>
            <person name="Lander E.S."/>
            <person name="Nusbaum C."/>
        </authorList>
    </citation>
    <scope>NUCLEOTIDE SEQUENCE [LARGE SCALE GENOMIC DNA]</scope>
</reference>
<reference key="4">
    <citation type="submission" date="2005-09" db="EMBL/GenBank/DDBJ databases">
        <authorList>
            <person name="Mural R.J."/>
            <person name="Istrail S."/>
            <person name="Sutton G.G."/>
            <person name="Florea L."/>
            <person name="Halpern A.L."/>
            <person name="Mobarry C.M."/>
            <person name="Lippert R."/>
            <person name="Walenz B."/>
            <person name="Shatkay H."/>
            <person name="Dew I."/>
            <person name="Miller J.R."/>
            <person name="Flanigan M.J."/>
            <person name="Edwards N.J."/>
            <person name="Bolanos R."/>
            <person name="Fasulo D."/>
            <person name="Halldorsson B.V."/>
            <person name="Hannenhalli S."/>
            <person name="Turner R."/>
            <person name="Yooseph S."/>
            <person name="Lu F."/>
            <person name="Nusskern D.R."/>
            <person name="Shue B.C."/>
            <person name="Zheng X.H."/>
            <person name="Zhong F."/>
            <person name="Delcher A.L."/>
            <person name="Huson D.H."/>
            <person name="Kravitz S.A."/>
            <person name="Mouchard L."/>
            <person name="Reinert K."/>
            <person name="Remington K.A."/>
            <person name="Clark A.G."/>
            <person name="Waterman M.S."/>
            <person name="Eichler E.E."/>
            <person name="Adams M.D."/>
            <person name="Hunkapiller M.W."/>
            <person name="Myers E.W."/>
            <person name="Venter J.C."/>
        </authorList>
    </citation>
    <scope>NUCLEOTIDE SEQUENCE [LARGE SCALE GENOMIC DNA]</scope>
</reference>
<reference key="5">
    <citation type="journal article" date="2004" name="Genome Res.">
        <title>The status, quality, and expansion of the NIH full-length cDNA project: the Mammalian Gene Collection (MGC).</title>
        <authorList>
            <consortium name="The MGC Project Team"/>
        </authorList>
    </citation>
    <scope>NUCLEOTIDE SEQUENCE [LARGE SCALE MRNA] (ISOFORM 1)</scope>
    <source>
        <tissue>Muscle</tissue>
    </source>
</reference>
<reference key="6">
    <citation type="journal article" date="1997" name="EMBO J.">
        <title>An evolutionarily conserved U5 snRNP-specific protein is a GTP-binding factor closely related to the ribosomal translocase EF-2.</title>
        <authorList>
            <person name="Fabrizio P."/>
            <person name="Laggerbauer B."/>
            <person name="Lauber J."/>
            <person name="Lane W.S."/>
            <person name="Luehrmann R."/>
        </authorList>
    </citation>
    <scope>CHARACTERIZATION</scope>
</reference>
<reference key="7">
    <citation type="journal article" date="1998" name="Mol. Cell. Biol.">
        <title>The human U5-220kD protein (hPrp8) forms a stable RNA-free complex with several U5-specific proteins, including an RNA unwindase, a homologue of ribosomal elongation factor EF-2, and a novel WD-40 protein.</title>
        <authorList>
            <person name="Achsel T."/>
            <person name="Ahrens K."/>
            <person name="Brahms H."/>
            <person name="Teigelkamp S."/>
            <person name="Luehrmann R."/>
        </authorList>
    </citation>
    <scope>INTERACTION WITH PRPF8</scope>
</reference>
<reference key="8">
    <citation type="journal article" date="2002" name="RNA">
        <title>Purification and characterization of native spliceosomes suitable for three-dimensional structural analysis.</title>
        <authorList>
            <person name="Jurica M.S."/>
            <person name="Licklider L.J."/>
            <person name="Gygi S.P."/>
            <person name="Grigorieff N."/>
            <person name="Moore M.J."/>
        </authorList>
    </citation>
    <scope>IDENTIFICATION BY MASS SPECTROMETRY</scope>
    <scope>IDENTIFICATION IN THE SPLICEOSOMAL C COMPLEX</scope>
</reference>
<reference key="9">
    <citation type="journal article" date="2006" name="Cell">
        <title>Global, in vivo, and site-specific phosphorylation dynamics in signaling networks.</title>
        <authorList>
            <person name="Olsen J.V."/>
            <person name="Blagoev B."/>
            <person name="Gnad F."/>
            <person name="Macek B."/>
            <person name="Kumar C."/>
            <person name="Mortensen P."/>
            <person name="Mann M."/>
        </authorList>
    </citation>
    <scope>PHOSPHORYLATION [LARGE SCALE ANALYSIS] AT SER-19</scope>
    <scope>IDENTIFICATION BY MASS SPECTROMETRY [LARGE SCALE ANALYSIS]</scope>
    <source>
        <tissue>Cervix carcinoma</tissue>
    </source>
</reference>
<reference key="10">
    <citation type="journal article" date="2006" name="RNA">
        <title>The network of protein-protein interactions within the human U4/U6.U5 tri-snRNP.</title>
        <authorList>
            <person name="Liu S."/>
            <person name="Rauhut R."/>
            <person name="Vornlocher H.-P."/>
            <person name="Luehrmann R."/>
        </authorList>
    </citation>
    <scope>SUBUNIT</scope>
</reference>
<reference key="11">
    <citation type="journal article" date="2007" name="Science">
        <title>ATM and ATR substrate analysis reveals extensive protein networks responsive to DNA damage.</title>
        <authorList>
            <person name="Matsuoka S."/>
            <person name="Ballif B.A."/>
            <person name="Smogorzewska A."/>
            <person name="McDonald E.R. III"/>
            <person name="Hurov K.E."/>
            <person name="Luo J."/>
            <person name="Bakalarski C.E."/>
            <person name="Zhao Z."/>
            <person name="Solimini N."/>
            <person name="Lerenthal Y."/>
            <person name="Shiloh Y."/>
            <person name="Gygi S.P."/>
            <person name="Elledge S.J."/>
        </authorList>
    </citation>
    <scope>IDENTIFICATION BY MASS SPECTROMETRY [LARGE SCALE ANALYSIS]</scope>
    <source>
        <tissue>Embryonic kidney</tissue>
    </source>
</reference>
<reference key="12">
    <citation type="journal article" date="2009" name="Anal. Chem.">
        <title>Lys-N and trypsin cover complementary parts of the phosphoproteome in a refined SCX-based approach.</title>
        <authorList>
            <person name="Gauci S."/>
            <person name="Helbig A.O."/>
            <person name="Slijper M."/>
            <person name="Krijgsveld J."/>
            <person name="Heck A.J."/>
            <person name="Mohammed S."/>
        </authorList>
    </citation>
    <scope>ACETYLATION [LARGE SCALE ANALYSIS] AT MET-1</scope>
    <scope>IDENTIFICATION BY MASS SPECTROMETRY [LARGE SCALE ANALYSIS]</scope>
</reference>
<reference key="13">
    <citation type="journal article" date="2010" name="Mol. Cancer Res.">
        <title>Interactions of ErbB4 and Kap1 connect the growth factor and DNA damage response pathways.</title>
        <authorList>
            <person name="Gilmore-Hebert M."/>
            <person name="Ramabhadran R."/>
            <person name="Stern D.F."/>
        </authorList>
    </citation>
    <scope>IDENTIFICATION BY MASS SPECTROMETRY</scope>
    <scope>INTERACTION WITH ERBB4</scope>
    <scope>SUBCELLULAR LOCATION</scope>
</reference>
<reference key="14">
    <citation type="journal article" date="2010" name="Sci. Signal.">
        <title>Quantitative phosphoproteomics reveals widespread full phosphorylation site occupancy during mitosis.</title>
        <authorList>
            <person name="Olsen J.V."/>
            <person name="Vermeulen M."/>
            <person name="Santamaria A."/>
            <person name="Kumar C."/>
            <person name="Miller M.L."/>
            <person name="Jensen L.J."/>
            <person name="Gnad F."/>
            <person name="Cox J."/>
            <person name="Jensen T.S."/>
            <person name="Nigg E.A."/>
            <person name="Brunak S."/>
            <person name="Mann M."/>
        </authorList>
    </citation>
    <scope>ACETYLATION [LARGE SCALE ANALYSIS] AT MET-1</scope>
    <scope>PHOSPHORYLATION [LARGE SCALE ANALYSIS] AT SER-19</scope>
    <scope>IDENTIFICATION BY MASS SPECTROMETRY [LARGE SCALE ANALYSIS]</scope>
    <source>
        <tissue>Cervix carcinoma</tissue>
    </source>
</reference>
<reference key="15">
    <citation type="journal article" date="2011" name="BMC Syst. Biol.">
        <title>Initial characterization of the human central proteome.</title>
        <authorList>
            <person name="Burkard T.R."/>
            <person name="Planyavsky M."/>
            <person name="Kaupe I."/>
            <person name="Breitwieser F.P."/>
            <person name="Buerckstuemmer T."/>
            <person name="Bennett K.L."/>
            <person name="Superti-Furga G."/>
            <person name="Colinge J."/>
        </authorList>
    </citation>
    <scope>IDENTIFICATION BY MASS SPECTROMETRY [LARGE SCALE ANALYSIS]</scope>
</reference>
<reference key="16">
    <citation type="journal article" date="2011" name="Sci. Signal.">
        <title>System-wide temporal characterization of the proteome and phosphoproteome of human embryonic stem cell differentiation.</title>
        <authorList>
            <person name="Rigbolt K.T."/>
            <person name="Prokhorova T.A."/>
            <person name="Akimov V."/>
            <person name="Henningsen J."/>
            <person name="Johansen P.T."/>
            <person name="Kratchmarova I."/>
            <person name="Kassem M."/>
            <person name="Mann M."/>
            <person name="Olsen J.V."/>
            <person name="Blagoev B."/>
        </authorList>
    </citation>
    <scope>ACETYLATION [LARGE SCALE ANALYSIS] AT MET-1</scope>
    <scope>PHOSPHORYLATION [LARGE SCALE ANALYSIS] AT SER-19</scope>
    <scope>IDENTIFICATION BY MASS SPECTROMETRY [LARGE SCALE ANALYSIS]</scope>
</reference>
<reference key="17">
    <citation type="journal article" date="2012" name="Mol. Cell. Proteomics">
        <title>Comparative large-scale characterisation of plant vs. mammal proteins reveals similar and idiosyncratic N-alpha acetylation features.</title>
        <authorList>
            <person name="Bienvenut W.V."/>
            <person name="Sumpton D."/>
            <person name="Martinez A."/>
            <person name="Lilla S."/>
            <person name="Espagne C."/>
            <person name="Meinnel T."/>
            <person name="Giglione C."/>
        </authorList>
    </citation>
    <scope>ACETYLATION [LARGE SCALE ANALYSIS] AT MET-1</scope>
    <scope>IDENTIFICATION BY MASS SPECTROMETRY [LARGE SCALE ANALYSIS]</scope>
</reference>
<reference key="18">
    <citation type="journal article" date="2013" name="J. Proteome Res.">
        <title>Toward a comprehensive characterization of a human cancer cell phosphoproteome.</title>
        <authorList>
            <person name="Zhou H."/>
            <person name="Di Palma S."/>
            <person name="Preisinger C."/>
            <person name="Peng M."/>
            <person name="Polat A.N."/>
            <person name="Heck A.J."/>
            <person name="Mohammed S."/>
        </authorList>
    </citation>
    <scope>IDENTIFICATION BY MASS SPECTROMETRY [LARGE SCALE ANALYSIS]</scope>
    <source>
        <tissue>Erythroleukemia</tissue>
    </source>
</reference>
<reference key="19">
    <citation type="journal article" date="2014" name="Cell Rep.">
        <title>Phosphorylation-dependent PIH1D1 interactions define substrate specificity of the R2TP cochaperone complex.</title>
        <authorList>
            <person name="Horejsi Z."/>
            <person name="Stach L."/>
            <person name="Flower T.G."/>
            <person name="Joshi D."/>
            <person name="Flynn H."/>
            <person name="Skehel J.M."/>
            <person name="O'Reilly N.J."/>
            <person name="Ogrodowicz R.W."/>
            <person name="Smerdon S.J."/>
            <person name="Boulton S.J."/>
        </authorList>
    </citation>
    <scope>INTERACTION WITH PIH1D1</scope>
</reference>
<reference key="20">
    <citation type="journal article" date="2014" name="J. Proteomics">
        <title>An enzyme assisted RP-RPLC approach for in-depth analysis of human liver phosphoproteome.</title>
        <authorList>
            <person name="Bian Y."/>
            <person name="Song C."/>
            <person name="Cheng K."/>
            <person name="Dong M."/>
            <person name="Wang F."/>
            <person name="Huang J."/>
            <person name="Sun D."/>
            <person name="Wang L."/>
            <person name="Ye M."/>
            <person name="Zou H."/>
        </authorList>
    </citation>
    <scope>PHOSPHORYLATION [LARGE SCALE ANALYSIS] AT SER-19 AND THR-86</scope>
    <scope>IDENTIFICATION BY MASS SPECTROMETRY [LARGE SCALE ANALYSIS]</scope>
    <source>
        <tissue>Liver</tissue>
    </source>
</reference>
<reference key="21">
    <citation type="journal article" date="2014" name="EMBO Rep.">
        <title>UBL5 is essential for pre-mRNA splicing and sister chromatid cohesion in human cells.</title>
        <authorList>
            <person name="Oka Y."/>
            <person name="Varmark H."/>
            <person name="Vitting-Seerup K."/>
            <person name="Beli P."/>
            <person name="Waage J."/>
            <person name="Hakobyan A."/>
            <person name="Mistrik M."/>
            <person name="Choudhary C."/>
            <person name="Rohde M."/>
            <person name="Bekker-Jensen S."/>
            <person name="Mailand N."/>
        </authorList>
    </citation>
    <scope>FUNCTION</scope>
    <scope>INTERACTION WITH UBL5</scope>
</reference>
<reference key="22">
    <citation type="journal article" date="2014" name="Proc. Natl. Acad. Sci. U.S.A.">
        <title>Mapping of SUMO sites and analysis of SUMOylation changes induced by external stimuli.</title>
        <authorList>
            <person name="Impens F."/>
            <person name="Radoshevich L."/>
            <person name="Cossart P."/>
            <person name="Ribet D."/>
        </authorList>
    </citation>
    <scope>SUMOYLATION [LARGE SCALE ANALYSIS] AT LYS-64</scope>
    <scope>IDENTIFICATION BY MASS SPECTROMETRY [LARGE SCALE ANALYSIS]</scope>
</reference>
<reference key="23">
    <citation type="journal article" date="2017" name="Nat. Commun.">
        <title>R2TP/Prefoldin-like component RUVBL1/RUVBL2 directly interacts with ZNHIT2 to regulate assembly of U5 small nuclear ribonucleoprotein.</title>
        <authorList>
            <person name="Cloutier P."/>
            <person name="Poitras C."/>
            <person name="Durand M."/>
            <person name="Hekmat O."/>
            <person name="Fiola-Masson E."/>
            <person name="Bouchard A."/>
            <person name="Faubert D."/>
            <person name="Chabot B."/>
            <person name="Coulombe B."/>
        </authorList>
    </citation>
    <scope>INTERACTION WITH RPAP3 AND URI1</scope>
</reference>
<reference key="24">
    <citation type="journal article" date="2017" name="Nat. Struct. Mol. Biol.">
        <title>Site-specific mapping of the human SUMO proteome reveals co-modification with phosphorylation.</title>
        <authorList>
            <person name="Hendriks I.A."/>
            <person name="Lyon D."/>
            <person name="Young C."/>
            <person name="Jensen L.J."/>
            <person name="Vertegaal A.C."/>
            <person name="Nielsen M.L."/>
        </authorList>
    </citation>
    <scope>SUMOYLATION [LARGE SCALE ANALYSIS] AT LYS-64</scope>
    <scope>IDENTIFICATION BY MASS SPECTROMETRY [LARGE SCALE ANALYSIS]</scope>
</reference>
<reference key="25">
    <citation type="journal article" date="2019" name="RNA">
        <title>Human nuclear RNAi-defective 2 (NRDE2) is an essential RNA splicing factor.</title>
        <authorList>
            <person name="Jiao A.L."/>
            <person name="Perales R."/>
            <person name="Umbreit N.T."/>
            <person name="Haswell J.R."/>
            <person name="Piper M.E."/>
            <person name="Adams B.D."/>
            <person name="Pellman D."/>
            <person name="Kennedy S."/>
            <person name="Slack F.J."/>
        </authorList>
    </citation>
    <scope>INTERACTION WITH NRDE2</scope>
</reference>
<reference key="26">
    <citation type="journal article" date="2020" name="Nat. Commun.">
        <title>Mutations in FAM50A suggest that Armfield XLID syndrome is a spliceosomopathy.</title>
        <authorList>
            <person name="Lee Y.R."/>
            <person name="Khan K."/>
            <person name="Armfield-Uhas K."/>
            <person name="Srikanth S."/>
            <person name="Thompson N.A."/>
            <person name="Pardo M."/>
            <person name="Yu L."/>
            <person name="Norris J.W."/>
            <person name="Peng Y."/>
            <person name="Gripp K.W."/>
            <person name="Aleck K.A."/>
            <person name="Li C."/>
            <person name="Spence E."/>
            <person name="Choi T.I."/>
            <person name="Kwon S.J."/>
            <person name="Park H.M."/>
            <person name="Yu D."/>
            <person name="Do Heo W."/>
            <person name="Mooney M.R."/>
            <person name="Baig S.M."/>
            <person name="Wentzensen I.M."/>
            <person name="Telegrafi A."/>
            <person name="McWalter K."/>
            <person name="Moreland T."/>
            <person name="Roadhouse C."/>
            <person name="Ramsey K."/>
            <person name="Lyons M.J."/>
            <person name="Skinner C."/>
            <person name="Alexov E."/>
            <person name="Katsanis N."/>
            <person name="Stevenson R.E."/>
            <person name="Choudhary J.S."/>
            <person name="Adams D.J."/>
            <person name="Kim C.H."/>
            <person name="Davis E.E."/>
            <person name="Schwartz C.E."/>
        </authorList>
    </citation>
    <scope>INTERACTION WITH FAM50A</scope>
</reference>
<reference evidence="27" key="27">
    <citation type="journal article" date="2016" name="Science">
        <title>Molecular architecture of the human U4/U6.U5 tri-snRNP.</title>
        <authorList>
            <person name="Agafonov D.E."/>
            <person name="Kastner B."/>
            <person name="Dybkov O."/>
            <person name="Hofele R.V."/>
            <person name="Liu W.T."/>
            <person name="Urlaub H."/>
            <person name="Luhrmann R."/>
            <person name="Stark H."/>
        </authorList>
    </citation>
    <scope>STRUCTURE BY ELECTRON MICROSCOPY (7.00 ANGSTROMS)</scope>
    <scope>IDENTIFICATION BY MASS SPECTROMETRY</scope>
    <scope>SUBCELLULAR LOCATION</scope>
    <scope>SUBUNIT</scope>
</reference>
<reference evidence="30" key="28">
    <citation type="journal article" date="2017" name="Cell">
        <title>An Atomic Structure of the Human Spliceosome.</title>
        <authorList>
            <person name="Zhang X."/>
            <person name="Yan C."/>
            <person name="Hang J."/>
            <person name="Finci L.I."/>
            <person name="Lei J."/>
            <person name="Shi Y."/>
        </authorList>
    </citation>
    <scope>STRUCTURE BY ELECTRON MICROSCOPY (3.60 ANGSTROMS)</scope>
    <scope>FUNCTION</scope>
    <scope>SUBCELLULAR LOCATION</scope>
    <scope>SUBUNIT</scope>
</reference>
<reference evidence="29" key="29">
    <citation type="journal article" date="2017" name="Cell">
        <title>Cryo-EM Structure of a Pre-catalytic Human Spliceosome Primed for Activation.</title>
        <authorList>
            <person name="Bertram K."/>
            <person name="Agafonov D.E."/>
            <person name="Dybkov O."/>
            <person name="Haselbach D."/>
            <person name="Leelaram M.N."/>
            <person name="Will C.L."/>
            <person name="Urlaub H."/>
            <person name="Kastner B."/>
            <person name="Luhrmann R."/>
            <person name="Stark H."/>
        </authorList>
    </citation>
    <scope>STRUCTURE BY ELECTRON MICROSCOPY (4.50 ANGSTROMS)</scope>
    <scope>FUNCTION</scope>
    <scope>SUBCELLULAR LOCATION</scope>
    <scope>SUBUNIT</scope>
</reference>
<reference evidence="28" key="30">
    <citation type="journal article" date="2017" name="Nature">
        <title>Cryo-EM structure of a human spliceosome activated for step 2 of splicing.</title>
        <authorList>
            <person name="Bertram K."/>
            <person name="Agafonov D.E."/>
            <person name="Liu W.T."/>
            <person name="Dybkov O."/>
            <person name="Will C.L."/>
            <person name="Hartmuth K."/>
            <person name="Urlaub H."/>
            <person name="Kastner B."/>
            <person name="Stark H."/>
            <person name="Luhrmann R."/>
        </authorList>
    </citation>
    <scope>STRUCTURE BY ELECTRON MICROSCOPY (5.90 ANGSTROMS)</scope>
    <scope>FUNCTION</scope>
    <scope>SUBCELLULAR LOCATION</scope>
    <scope>SUBUNIT</scope>
</reference>
<reference evidence="37" key="31">
    <citation type="journal article" date="2018" name="Cell">
        <title>Structure and Conformational Dynamics of the Human Spliceosomal Bact Complex.</title>
        <authorList>
            <person name="Haselbach D."/>
            <person name="Komarov I."/>
            <person name="Agafonov D.E."/>
            <person name="Hartmuth K."/>
            <person name="Graf B."/>
            <person name="Dybkov O."/>
            <person name="Urlaub H."/>
            <person name="Kastner B."/>
            <person name="Luhrmann R."/>
            <person name="Stark H."/>
        </authorList>
    </citation>
    <scope>STRUCTURE BY ELECTRON MICROSCOPY (3.40 ANGSTROMS)</scope>
    <scope>FUNCTION</scope>
    <scope>SUBCELLULAR LOCATION</scope>
    <scope>SUBUNIT</scope>
</reference>
<reference evidence="35 36" key="32">
    <citation type="journal article" date="2018" name="Cell Res.">
        <title>Structures of the human pre-catalytic spliceosome and its precursor spliceosome.</title>
        <authorList>
            <person name="Zhan X."/>
            <person name="Yan C."/>
            <person name="Zhang X."/>
            <person name="Lei J."/>
            <person name="Shi Y."/>
        </authorList>
    </citation>
    <scope>STRUCTURE BY ELECTRON MICROSCOPY (3.80 ANGSTROMS)</scope>
    <scope>FUNCTION</scope>
    <scope>SUBCELLULAR LOCATION</scope>
    <scope>SUBUNIT</scope>
</reference>
<reference evidence="32 33 34" key="33">
    <citation type="journal article" date="2018" name="Cell Res.">
        <title>Structure of the human activated spliceosome in three conformational states.</title>
        <authorList>
            <person name="Zhang X."/>
            <person name="Yan C."/>
            <person name="Zhan X."/>
            <person name="Li L."/>
            <person name="Lei J."/>
            <person name="Shi Y."/>
        </authorList>
    </citation>
    <scope>STRUCTURE BY ELECTRON MICROSCOPY (4.90 ANGSTROMS)</scope>
    <scope>FUNCTION</scope>
    <scope>SUBCELLULAR LOCATION</scope>
    <scope>SUBUNIT</scope>
</reference>
<reference evidence="31" key="34">
    <citation type="journal article" date="2018" name="Science">
        <title>Structure of a human catalytic step I spliceosome.</title>
        <authorList>
            <person name="Zhan X."/>
            <person name="Yan C."/>
            <person name="Zhang X."/>
            <person name="Lei J."/>
            <person name="Shi Y."/>
        </authorList>
    </citation>
    <scope>STRUCTURE BY ELECTRON MICROSCOPY (4.10 ANGSTROMS)</scope>
    <scope>FUNCTION</scope>
    <scope>SUBCELLULAR LOCATION</scope>
    <scope>SUBUNIT</scope>
</reference>
<reference evidence="38" key="35">
    <citation type="journal article" date="2019" name="Science">
        <title>A human postcatalytic spliceosome structure reveals essential roles of metazoan factors for exon ligation.</title>
        <authorList>
            <person name="Fica S.M."/>
            <person name="Oubridge C."/>
            <person name="Wilkinson M.E."/>
            <person name="Newman A.J."/>
            <person name="Nagai K."/>
        </authorList>
    </citation>
    <scope>STRUCTURE BY ELECTRON MICROSCOPY (3.30 ANGSTROMS) OF 56-955</scope>
    <scope>FUNCTION</scope>
    <scope>SUBCELLULAR LOCATION</scope>
    <scope>SUBUNIT</scope>
</reference>
<reference key="36">
    <citation type="journal article" date="2012" name="Am. J. Hum. Genet.">
        <title>Haploinsufficiency of a spliceosomal GTPase encoded by EFTUD2 causes mandibulofacial dysostosis with microcephaly.</title>
        <authorList>
            <person name="Lines M.A."/>
            <person name="Huang L."/>
            <person name="Schwartzentruber J."/>
            <person name="Douglas S.L."/>
            <person name="Lynch D.C."/>
            <person name="Beaulieu C."/>
            <person name="Guion-Almeida M.L."/>
            <person name="Zechi-Ceide R.M."/>
            <person name="Gener B."/>
            <person name="Gillessen-Kaesbach G."/>
            <person name="Nava C."/>
            <person name="Baujat G."/>
            <person name="Horn D."/>
            <person name="Kini U."/>
            <person name="Caliebe A."/>
            <person name="Alanay Y."/>
            <person name="Utine G.E."/>
            <person name="Lev D."/>
            <person name="Kohlhase J."/>
            <person name="Grix A.W."/>
            <person name="Lohmann D.R."/>
            <person name="Hehr U."/>
            <person name="Bohm D."/>
            <person name="Majewski J."/>
            <person name="Bulman D.E."/>
            <person name="Wieczorek D."/>
            <person name="Boycott K.M."/>
        </authorList>
    </citation>
    <scope>VARIANTS MFDM TRP-262; ARG-476 AND ARG-637</scope>
</reference>
<reference evidence="39" key="37">
    <citation type="journal article" date="2021" name="Science">
        <title>Structure of the activated human minor spliceosome.</title>
        <authorList>
            <person name="Bai R."/>
            <person name="Wan R."/>
            <person name="Wang L."/>
            <person name="Xu K."/>
            <person name="Zhang Q."/>
            <person name="Lei J."/>
            <person name="Shi Y."/>
        </authorList>
    </citation>
    <scope>STRUCTURE BY ELECTRON MICROSCOPY (2.89 ANGSTROMS)</scope>
    <scope>FUNCTION</scope>
    <scope>SUBUNIT</scope>
</reference>
<gene>
    <name type="primary">EFTUD2</name>
    <name type="synonym">KIAA0031</name>
    <name type="synonym">SNRP116</name>
</gene>
<keyword id="KW-0002">3D-structure</keyword>
<keyword id="KW-0007">Acetylation</keyword>
<keyword id="KW-0025">Alternative splicing</keyword>
<keyword id="KW-0225">Disease variant</keyword>
<keyword id="KW-0342">GTP-binding</keyword>
<keyword id="KW-0991">Intellectual disability</keyword>
<keyword id="KW-1017">Isopeptide bond</keyword>
<keyword id="KW-0507">mRNA processing</keyword>
<keyword id="KW-0508">mRNA splicing</keyword>
<keyword id="KW-0547">Nucleotide-binding</keyword>
<keyword id="KW-0539">Nucleus</keyword>
<keyword id="KW-0597">Phosphoprotein</keyword>
<keyword id="KW-1267">Proteomics identification</keyword>
<keyword id="KW-1185">Reference proteome</keyword>
<keyword id="KW-0747">Spliceosome</keyword>
<keyword id="KW-0832">Ubl conjugation</keyword>
<comment type="function">
    <text evidence="5 9 11 12 14 15 16 17 18 20 26">Required for pre-mRNA splicing as component of the spliceosome, including pre-catalytic, catalytic and post-catalytic spliceosomal complexes (PubMed:25092792, PubMed:28076346, PubMed:28502770, PubMed:28781166, PubMed:29301961, PubMed:29360106, PubMed:29361316, PubMed:30315277, PubMed:30705154). Component of the U5 snRNP and the U4/U6-U5 tri-snRNP complex, a building block of the spliceosome (PubMed:16723661). As a component of the minor spliceosome, involved in the splicing of U12-type introns in pre-mRNAs (Probable).</text>
</comment>
<comment type="subunit">
    <text evidence="4 5 6 8 9 10 11 12 13 14 15 16 17 18 19 20 21 22 23">Component of the U5 snRNP and the U4/U6-U5 tri-snRNP complex, a building block of the spliceosome (PubMed:16723661, PubMed:26912367). The U4/U6-U5 tri-snRNP complex is composed of the U4, U6 and U5 snRNAs and at least PRPF3, PRPF4, PRPF6, PRPF8, PRPF31, SNRNP200, TXNL4A, SNRNP40, DDX23, CD2BP2, PPIH, SNU13, EFTUD2, SART1 and USP39 (PubMed:16723661, PubMed:26912367). Component of the pre-catalytic, catalytic and post-catalytic spliceosome complexes (PubMed:28076346, PubMed:28502770, PubMed:28781166, PubMed:29301961, PubMed:29360106, PubMed:29361316, PubMed:30315277, PubMed:30705154). Component of the minor spliceosome, which splices U12-type introns. Within this complex, interacts with CRIPT (PubMed:33509932). Interacts with ERBB4 and PRPF8. Interacts with PIH1D1 (PubMed:24656813). Interacts with RPAP3 and URI1 in a ZNHIT2-dependent manner (PubMed:28561026). Interacts with NRDE2 (PubMed:30538148). Interacts with FAM50A (PubMed:32703943). Interacts with UBL5 (PubMed:25092792).</text>
</comment>
<comment type="interaction">
    <interactant intactId="EBI-357897">
        <id>Q15029</id>
    </interactant>
    <interactant intactId="EBI-352682">
        <id>P04792</id>
        <label>HSPB1</label>
    </interactant>
    <organismsDiffer>false</organismsDiffer>
    <experiments>2</experiments>
</comment>
<comment type="interaction">
    <interactant intactId="EBI-357897">
        <id>Q15029</id>
    </interactant>
    <interactant intactId="EBI-713456">
        <id>Q13123</id>
        <label>IK</label>
    </interactant>
    <organismsDiffer>false</organismsDiffer>
    <experiments>3</experiments>
</comment>
<comment type="interaction">
    <interactant intactId="EBI-357897">
        <id>Q15029</id>
    </interactant>
    <interactant intactId="EBI-447544">
        <id>P01106</id>
        <label>MYC</label>
    </interactant>
    <organismsDiffer>false</organismsDiffer>
    <experiments>5</experiments>
</comment>
<comment type="interaction">
    <interactant intactId="EBI-357897">
        <id>Q15029</id>
    </interactant>
    <interactant intactId="EBI-536755">
        <id>O94906</id>
        <label>PRPF6</label>
    </interactant>
    <organismsDiffer>false</organismsDiffer>
    <experiments>6</experiments>
</comment>
<comment type="interaction">
    <interactant intactId="EBI-357897">
        <id>Q15029</id>
    </interactant>
    <interactant intactId="EBI-538479">
        <id>Q6P2Q9</id>
        <label>PRPF8</label>
    </interactant>
    <organismsDiffer>false</organismsDiffer>
    <experiments>11</experiments>
</comment>
<comment type="interaction">
    <interactant intactId="EBI-357897">
        <id>Q15029</id>
    </interactant>
    <interactant intactId="EBI-2462271">
        <id>Q15428</id>
        <label>SF3A2</label>
    </interactant>
    <organismsDiffer>false</organismsDiffer>
    <experiments>2</experiments>
</comment>
<comment type="interaction">
    <interactant intactId="EBI-357897">
        <id>Q15029</id>
    </interactant>
    <interactant intactId="EBI-348469">
        <id>Q15427</id>
        <label>SF3B4</label>
    </interactant>
    <organismsDiffer>false</organismsDiffer>
    <experiments>2</experiments>
</comment>
<comment type="interaction">
    <interactant intactId="EBI-357897">
        <id>Q15029</id>
    </interactant>
    <interactant intactId="EBI-1045395">
        <id>O75643</id>
        <label>SNRNP200</label>
    </interactant>
    <organismsDiffer>false</organismsDiffer>
    <experiments>6</experiments>
</comment>
<comment type="interaction">
    <interactant intactId="EBI-357897">
        <id>Q15029</id>
    </interactant>
    <interactant intactId="EBI-538492">
        <id>Q96DI7</id>
        <label>SNRNP40</label>
    </interactant>
    <organismsDiffer>false</organismsDiffer>
    <experiments>6</experiments>
</comment>
<comment type="subcellular location">
    <subcellularLocation>
        <location evidence="6 10 11 12 14 15 16 17 18 20">Nucleus</location>
    </subcellularLocation>
</comment>
<comment type="alternative products">
    <event type="alternative splicing"/>
    <isoform>
        <id>Q15029-1</id>
        <name>1</name>
        <sequence type="displayed"/>
    </isoform>
    <isoform>
        <id>Q15029-2</id>
        <name>2</name>
        <sequence type="described" ref="VSP_044282"/>
    </isoform>
    <isoform>
        <id>Q15029-3</id>
        <name>3</name>
        <sequence type="described" ref="VSP_055175"/>
    </isoform>
</comment>
<comment type="disease" evidence="7">
    <disease id="DI-03414">
        <name>Mandibulofacial dysostosis with microcephaly</name>
        <acronym>MFDM</acronym>
        <description>A rare syndrome characterized by progressive microcephaly, midface and malar hypoplasia, micrognathia, microtia, dysplastic ears, preauricular skin tags, significant developmental delay, and speech delay. Many patients have major sequelae, including choanal atresia that results in respiratory difficulties, conductive hearing loss, and cleft palate.</description>
        <dbReference type="MIM" id="610536"/>
    </disease>
    <text>The disease is caused by variants affecting the gene represented in this entry.</text>
</comment>
<comment type="similarity">
    <text evidence="2">Belongs to the TRAFAC class translation factor GTPase superfamily. Classic translation factor GTPase family. EF-G/EF-2 subfamily.</text>
</comment>
<comment type="sequence caution" evidence="25">
    <conflict type="erroneous initiation">
        <sequence resource="EMBL-CDS" id="BAA04699"/>
    </conflict>
    <text>Extended N-terminus.</text>
</comment>
<organism>
    <name type="scientific">Homo sapiens</name>
    <name type="common">Human</name>
    <dbReference type="NCBI Taxonomy" id="9606"/>
    <lineage>
        <taxon>Eukaryota</taxon>
        <taxon>Metazoa</taxon>
        <taxon>Chordata</taxon>
        <taxon>Craniata</taxon>
        <taxon>Vertebrata</taxon>
        <taxon>Euteleostomi</taxon>
        <taxon>Mammalia</taxon>
        <taxon>Eutheria</taxon>
        <taxon>Euarchontoglires</taxon>
        <taxon>Primates</taxon>
        <taxon>Haplorrhini</taxon>
        <taxon>Catarrhini</taxon>
        <taxon>Hominidae</taxon>
        <taxon>Homo</taxon>
    </lineage>
</organism>
<name>U5S1_HUMAN</name>